<feature type="chain" id="PRO_0000086642" description="Serine/threonine-protein kinase Sgk1">
    <location>
        <begin position="1"/>
        <end position="431"/>
    </location>
</feature>
<feature type="domain" description="Protein kinase" evidence="1">
    <location>
        <begin position="98"/>
        <end position="355"/>
    </location>
</feature>
<feature type="domain" description="AGC-kinase C-terminal" evidence="2">
    <location>
        <begin position="356"/>
        <end position="431"/>
    </location>
</feature>
<feature type="region of interest" description="Necessary for localization to the mitochondria">
    <location>
        <begin position="1"/>
        <end position="60"/>
    </location>
</feature>
<feature type="region of interest" description="Disordered" evidence="3">
    <location>
        <begin position="66"/>
        <end position="92"/>
    </location>
</feature>
<feature type="short sequence motif" description="Nuclear localization signal" evidence="13">
    <location>
        <begin position="131"/>
        <end position="141"/>
    </location>
</feature>
<feature type="compositionally biased region" description="Polar residues" evidence="3">
    <location>
        <begin position="81"/>
        <end position="91"/>
    </location>
</feature>
<feature type="active site" description="Proton acceptor">
    <location>
        <position position="222"/>
    </location>
</feature>
<feature type="binding site">
    <location>
        <begin position="104"/>
        <end position="112"/>
    </location>
    <ligand>
        <name>ATP</name>
        <dbReference type="ChEBI" id="CHEBI:30616"/>
    </ligand>
</feature>
<feature type="binding site">
    <location>
        <position position="127"/>
    </location>
    <ligand>
        <name>ATP</name>
        <dbReference type="ChEBI" id="CHEBI:30616"/>
    </ligand>
</feature>
<feature type="modified residue" description="Phosphoserine" evidence="52 53">
    <location>
        <position position="74"/>
    </location>
</feature>
<feature type="modified residue" description="Phosphoserine; by MAPK7" evidence="8">
    <location>
        <position position="78"/>
    </location>
</feature>
<feature type="modified residue" description="Phosphothreonine; by PDPK1" evidence="4">
    <location>
        <position position="256"/>
    </location>
</feature>
<feature type="modified residue" description="Phosphothreonine; by PKA" evidence="6">
    <location>
        <position position="369"/>
    </location>
</feature>
<feature type="modified residue" description="Phosphoserine" evidence="40 52 53 54">
    <location>
        <position position="397"/>
    </location>
</feature>
<feature type="modified residue" description="Phosphoserine" evidence="40 52 53">
    <location>
        <position position="401"/>
    </location>
</feature>
<feature type="modified residue" description="Phosphoserine" evidence="4 39 43">
    <location>
        <position position="422"/>
    </location>
</feature>
<feature type="disulfide bond" description="Interchain (with C-258)" evidence="35">
    <location>
        <position position="193"/>
    </location>
</feature>
<feature type="disulfide bond" description="Interchain (with C-193)" evidence="35">
    <location>
        <position position="258"/>
    </location>
</feature>
<feature type="splice variant" id="VSP_037784" description="In isoform 2." evidence="48 49 50">
    <original>MTVKTEAAKGTLTYSRMRGMVAILI</original>
    <variation>MVNKDMNGFPVKKCSAFQFFKKRVRRWIKSPMVSVDKHQSPSLKYTGSSMVHIPPGEPDFESSLCQTCLGEHAFQRGVLPQENESCSWETQSGCEVREPCNHANILTKPDPRTFWTNDDP</variation>
    <location>
        <begin position="1"/>
        <end position="25"/>
    </location>
</feature>
<feature type="splice variant" id="VSP_037785" description="In isoform 3." evidence="48 50">
    <original>MTVKTEAAKGTLTYSRMRGMVAILI</original>
    <variation>MGEMQGALARARLESLLRPRHKKRAEAQKRSESFLLSGL</variation>
    <location>
        <begin position="1"/>
        <end position="25"/>
    </location>
</feature>
<feature type="splice variant" id="VSP_037786" description="In isoform 4." evidence="50">
    <original>MTVKTEAAKGTLTYSRMRGMVAILI</original>
    <variation>MKPSKRFFISPPSST</variation>
    <location>
        <begin position="1"/>
        <end position="25"/>
    </location>
</feature>
<feature type="splice variant" id="VSP_037787" description="In isoform 5." evidence="50">
    <original>MTVKTEAAKGTLTYSRMRGMVAILI</original>
    <variation>MSSQSSSLSEACSREAYSSHNWALPPASRSNPQPAYPWATRRMKEEAIKPPLK</variation>
    <location>
        <begin position="1"/>
        <end position="25"/>
    </location>
</feature>
<feature type="sequence variant" id="VAR_041071" description="In dbSNP:rs34133418." evidence="33">
    <original>V</original>
    <variation>I</variation>
    <location>
        <position position="219"/>
    </location>
</feature>
<feature type="sequence variant" id="VAR_041072" description="In dbSNP:rs55932330." evidence="33">
    <original>A</original>
    <variation>V</variation>
    <location>
        <position position="342"/>
    </location>
</feature>
<feature type="mutagenesis site" description="Abolishes enzymatic activity." evidence="10 17 20">
    <original>K</original>
    <variation>M</variation>
    <location>
        <position position="127"/>
    </location>
</feature>
<feature type="mutagenesis site" description="Low activity." evidence="4">
    <original>T</original>
    <variation>A</variation>
    <location>
        <position position="256"/>
    </location>
</feature>
<feature type="mutagenesis site" description="Low activity." evidence="4">
    <original>T</original>
    <variation>D</variation>
    <location>
        <position position="256"/>
    </location>
</feature>
<feature type="mutagenesis site" description="Low activity." evidence="4">
    <original>T</original>
    <variation>E</variation>
    <location>
        <position position="256"/>
    </location>
</feature>
<feature type="mutagenesis site" description="Abolishes interaction with NEDD4 and NEDD4L." evidence="10">
    <original>Y</original>
    <variation>A</variation>
    <location>
        <position position="298"/>
    </location>
</feature>
<feature type="mutagenesis site" description="Low activity." evidence="4 10 17 20">
    <original>S</original>
    <variation>A</variation>
    <location>
        <position position="422"/>
    </location>
</feature>
<feature type="mutagenesis site" description="10-fold activation." evidence="4 10 17 20">
    <original>S</original>
    <variation>D</variation>
    <location>
        <position position="422"/>
    </location>
</feature>
<feature type="sequence conflict" description="In Ref. 4; CAR58097." evidence="51" ref="4">
    <original>Q</original>
    <variation>E</variation>
    <location>
        <position position="62"/>
    </location>
</feature>
<feature type="sequence conflict" description="In Ref. 4; CAR58096." evidence="51" ref="4">
    <original>K</original>
    <variation>R</variation>
    <location>
        <position position="152"/>
    </location>
</feature>
<feature type="sequence conflict" description="In Ref. 4; CAR58095." evidence="51" ref="4">
    <original>E</original>
    <variation>G</variation>
    <location>
        <position position="196"/>
    </location>
</feature>
<feature type="sequence conflict" description="In Ref. 6; BAH12848." evidence="51" ref="6">
    <original>I</original>
    <variation>V</variation>
    <location>
        <position position="228"/>
    </location>
</feature>
<feature type="sequence conflict" description="In Ref. 4; CAR58097." evidence="51" ref="4">
    <original>P</original>
    <variation>R</variation>
    <location>
        <position position="371"/>
    </location>
</feature>
<feature type="sequence conflict" description="In Ref. 1; CAA71138 and 2; CAA04146." evidence="51" ref="1 2">
    <original>D</original>
    <variation>E</variation>
    <location>
        <position position="381"/>
    </location>
</feature>
<feature type="helix" evidence="55">
    <location>
        <begin position="95"/>
        <end position="97"/>
    </location>
</feature>
<feature type="strand" evidence="55">
    <location>
        <begin position="98"/>
        <end position="105"/>
    </location>
</feature>
<feature type="strand" evidence="55">
    <location>
        <begin position="111"/>
        <end position="117"/>
    </location>
</feature>
<feature type="turn" evidence="55">
    <location>
        <begin position="118"/>
        <end position="120"/>
    </location>
</feature>
<feature type="strand" evidence="55">
    <location>
        <begin position="123"/>
        <end position="130"/>
    </location>
</feature>
<feature type="helix" evidence="55">
    <location>
        <begin position="131"/>
        <end position="133"/>
    </location>
</feature>
<feature type="strand" evidence="55">
    <location>
        <begin position="162"/>
        <end position="167"/>
    </location>
</feature>
<feature type="strand" evidence="55">
    <location>
        <begin position="169"/>
        <end position="177"/>
    </location>
</feature>
<feature type="helix" evidence="55">
    <location>
        <begin position="184"/>
        <end position="191"/>
    </location>
</feature>
<feature type="helix" evidence="55">
    <location>
        <begin position="196"/>
        <end position="215"/>
    </location>
</feature>
<feature type="helix" evidence="55">
    <location>
        <begin position="225"/>
        <end position="227"/>
    </location>
</feature>
<feature type="strand" evidence="55">
    <location>
        <begin position="228"/>
        <end position="230"/>
    </location>
</feature>
<feature type="strand" evidence="56">
    <location>
        <begin position="232"/>
        <end position="234"/>
    </location>
</feature>
<feature type="strand" evidence="55">
    <location>
        <begin position="236"/>
        <end position="238"/>
    </location>
</feature>
<feature type="helix" evidence="55">
    <location>
        <begin position="245"/>
        <end position="247"/>
    </location>
</feature>
<feature type="strand" evidence="55">
    <location>
        <begin position="256"/>
        <end position="258"/>
    </location>
</feature>
<feature type="helix" evidence="55">
    <location>
        <begin position="266"/>
        <end position="269"/>
    </location>
</feature>
<feature type="helix" evidence="55">
    <location>
        <begin position="277"/>
        <end position="292"/>
    </location>
</feature>
<feature type="helix" evidence="55">
    <location>
        <begin position="302"/>
        <end position="311"/>
    </location>
</feature>
<feature type="strand" evidence="55">
    <location>
        <begin position="318"/>
        <end position="320"/>
    </location>
</feature>
<feature type="helix" evidence="55">
    <location>
        <begin position="322"/>
        <end position="331"/>
    </location>
</feature>
<feature type="helix" evidence="55">
    <location>
        <begin position="336"/>
        <end position="338"/>
    </location>
</feature>
<feature type="turn" evidence="55">
    <location>
        <begin position="340"/>
        <end position="345"/>
    </location>
</feature>
<feature type="helix" evidence="55">
    <location>
        <begin position="346"/>
        <end position="350"/>
    </location>
</feature>
<feature type="helix" evidence="55">
    <location>
        <begin position="353"/>
        <end position="355"/>
    </location>
</feature>
<feature type="helix" evidence="55">
    <location>
        <begin position="360"/>
        <end position="364"/>
    </location>
</feature>
<protein>
    <recommendedName>
        <fullName>Serine/threonine-protein kinase Sgk1</fullName>
        <ecNumber>2.7.11.1</ecNumber>
    </recommendedName>
    <alternativeName>
        <fullName>Serum/glucocorticoid-regulated kinase 1</fullName>
    </alternativeName>
</protein>
<dbReference type="EC" id="2.7.11.1"/>
<dbReference type="EMBL" id="Y10032">
    <property type="protein sequence ID" value="CAA71138.1"/>
    <property type="molecule type" value="mRNA"/>
</dbReference>
<dbReference type="EMBL" id="AJ000512">
    <property type="protein sequence ID" value="CAA04146.1"/>
    <property type="molecule type" value="Genomic_DNA"/>
</dbReference>
<dbReference type="EMBL" id="EU518415">
    <property type="protein sequence ID" value="ACD35864.1"/>
    <property type="molecule type" value="mRNA"/>
</dbReference>
<dbReference type="EMBL" id="FM205707">
    <property type="protein sequence ID" value="CAR58095.1"/>
    <property type="molecule type" value="mRNA"/>
</dbReference>
<dbReference type="EMBL" id="FM205708">
    <property type="protein sequence ID" value="CAR58096.1"/>
    <property type="molecule type" value="mRNA"/>
</dbReference>
<dbReference type="EMBL" id="FM205709">
    <property type="protein sequence ID" value="CAR58097.1"/>
    <property type="molecule type" value="mRNA"/>
</dbReference>
<dbReference type="EMBL" id="FM205710">
    <property type="protein sequence ID" value="CAR58098.1"/>
    <property type="molecule type" value="mRNA"/>
</dbReference>
<dbReference type="EMBL" id="AF153609">
    <property type="protein sequence ID" value="AAD41091.1"/>
    <property type="molecule type" value="mRNA"/>
</dbReference>
<dbReference type="EMBL" id="AK055077">
    <property type="protein sequence ID" value="BAG51463.1"/>
    <property type="molecule type" value="mRNA"/>
</dbReference>
<dbReference type="EMBL" id="AK298688">
    <property type="protein sequence ID" value="BAH12848.1"/>
    <property type="molecule type" value="mRNA"/>
</dbReference>
<dbReference type="EMBL" id="AL355881">
    <property type="status" value="NOT_ANNOTATED_CDS"/>
    <property type="molecule type" value="Genomic_DNA"/>
</dbReference>
<dbReference type="EMBL" id="AL135839">
    <property type="status" value="NOT_ANNOTATED_CDS"/>
    <property type="molecule type" value="Genomic_DNA"/>
</dbReference>
<dbReference type="EMBL" id="Z84486">
    <property type="status" value="NOT_ANNOTATED_CDS"/>
    <property type="molecule type" value="Genomic_DNA"/>
</dbReference>
<dbReference type="EMBL" id="CH471051">
    <property type="protein sequence ID" value="EAW47991.1"/>
    <property type="molecule type" value="Genomic_DNA"/>
</dbReference>
<dbReference type="EMBL" id="CH471051">
    <property type="protein sequence ID" value="EAW47992.1"/>
    <property type="molecule type" value="Genomic_DNA"/>
</dbReference>
<dbReference type="EMBL" id="CH471051">
    <property type="protein sequence ID" value="EAW47993.1"/>
    <property type="molecule type" value="Genomic_DNA"/>
</dbReference>
<dbReference type="EMBL" id="BC001263">
    <property type="protein sequence ID" value="AAH01263.1"/>
    <property type="molecule type" value="mRNA"/>
</dbReference>
<dbReference type="CCDS" id="CCDS47476.1">
    <molecule id="O00141-2"/>
</dbReference>
<dbReference type="CCDS" id="CCDS47477.1">
    <molecule id="O00141-5"/>
</dbReference>
<dbReference type="CCDS" id="CCDS47478.1">
    <molecule id="O00141-3"/>
</dbReference>
<dbReference type="CCDS" id="CCDS5170.1">
    <molecule id="O00141-1"/>
</dbReference>
<dbReference type="RefSeq" id="NP_001137148.1">
    <molecule id="O00141-2"/>
    <property type="nucleotide sequence ID" value="NM_001143676.3"/>
</dbReference>
<dbReference type="RefSeq" id="NP_001137149.1">
    <molecule id="O00141-5"/>
    <property type="nucleotide sequence ID" value="NM_001143677.2"/>
</dbReference>
<dbReference type="RefSeq" id="NP_001137150.1">
    <molecule id="O00141-3"/>
    <property type="nucleotide sequence ID" value="NM_001143678.2"/>
</dbReference>
<dbReference type="RefSeq" id="NP_001278924.1">
    <property type="nucleotide sequence ID" value="NM_001291995.1"/>
</dbReference>
<dbReference type="RefSeq" id="NP_005618.2">
    <molecule id="O00141-1"/>
    <property type="nucleotide sequence ID" value="NM_005627.3"/>
</dbReference>
<dbReference type="RefSeq" id="XP_011534373.1">
    <property type="nucleotide sequence ID" value="XM_011536071.1"/>
</dbReference>
<dbReference type="PDB" id="2R5T">
    <property type="method" value="X-ray"/>
    <property type="resolution" value="1.90 A"/>
    <property type="chains" value="A=60-431"/>
</dbReference>
<dbReference type="PDB" id="3HDM">
    <property type="method" value="X-ray"/>
    <property type="resolution" value="2.60 A"/>
    <property type="chains" value="A=60-431"/>
</dbReference>
<dbReference type="PDB" id="3HDN">
    <property type="method" value="X-ray"/>
    <property type="resolution" value="3.10 A"/>
    <property type="chains" value="A=60-431"/>
</dbReference>
<dbReference type="PDB" id="7PUE">
    <property type="method" value="X-ray"/>
    <property type="resolution" value="2.51 A"/>
    <property type="chains" value="A=60-431"/>
</dbReference>
<dbReference type="PDBsum" id="2R5T"/>
<dbReference type="PDBsum" id="3HDM"/>
<dbReference type="PDBsum" id="3HDN"/>
<dbReference type="PDBsum" id="7PUE"/>
<dbReference type="SMR" id="O00141"/>
<dbReference type="BioGRID" id="112344">
    <property type="interactions" value="73"/>
</dbReference>
<dbReference type="CORUM" id="O00141"/>
<dbReference type="DIP" id="DIP-42464N"/>
<dbReference type="ELM" id="O00141"/>
<dbReference type="FunCoup" id="O00141">
    <property type="interactions" value="2430"/>
</dbReference>
<dbReference type="IntAct" id="O00141">
    <property type="interactions" value="21"/>
</dbReference>
<dbReference type="MINT" id="O00141"/>
<dbReference type="STRING" id="9606.ENSP00000356832"/>
<dbReference type="BindingDB" id="O00141"/>
<dbReference type="ChEMBL" id="CHEMBL2343"/>
<dbReference type="DrugBank" id="DB08191">
    <property type="generic name" value="4-(5-phenyl-1H-pyrrolo[2,3-b]pyridin-3-yl)benzoic acid"/>
</dbReference>
<dbReference type="DrugBank" id="DB07837">
    <property type="generic name" value="[4-(5-naphthalen-2-yl-1H-pyrrolo[2,3-b]pyridin-3-yl)phenyl]acetic acid"/>
</dbReference>
<dbReference type="DrugBank" id="DB03777">
    <property type="generic name" value="Bisindolylmaleimide I"/>
</dbReference>
<dbReference type="DrugBank" id="DB12429">
    <property type="generic name" value="CI-1040"/>
</dbReference>
<dbReference type="DrugBank" id="DB03247">
    <property type="generic name" value="Flavin mononucleotide"/>
</dbReference>
<dbReference type="DrugBank" id="DB04462">
    <property type="generic name" value="Tetrabromo-2-Benzotriazole"/>
</dbReference>
<dbReference type="GuidetoPHARMACOLOGY" id="1534"/>
<dbReference type="GlyGen" id="O00141">
    <property type="glycosylation" value="1 site"/>
</dbReference>
<dbReference type="iPTMnet" id="O00141"/>
<dbReference type="PhosphoSitePlus" id="O00141"/>
<dbReference type="BioMuta" id="SGK1"/>
<dbReference type="jPOST" id="O00141"/>
<dbReference type="MassIVE" id="O00141"/>
<dbReference type="PaxDb" id="9606-ENSP00000356832"/>
<dbReference type="PeptideAtlas" id="O00141"/>
<dbReference type="ProteomicsDB" id="47726">
    <molecule id="O00141-1"/>
</dbReference>
<dbReference type="ProteomicsDB" id="47727">
    <molecule id="O00141-2"/>
</dbReference>
<dbReference type="ProteomicsDB" id="47728">
    <molecule id="O00141-3"/>
</dbReference>
<dbReference type="ProteomicsDB" id="47729">
    <molecule id="O00141-4"/>
</dbReference>
<dbReference type="ProteomicsDB" id="47730">
    <molecule id="O00141-5"/>
</dbReference>
<dbReference type="ABCD" id="O00141">
    <property type="antibodies" value="1 sequenced antibody"/>
</dbReference>
<dbReference type="Antibodypedia" id="19734">
    <property type="antibodies" value="903 antibodies from 47 providers"/>
</dbReference>
<dbReference type="DNASU" id="6446"/>
<dbReference type="Ensembl" id="ENST00000237305.12">
    <molecule id="O00141-1"/>
    <property type="protein sequence ID" value="ENSP00000237305.7"/>
    <property type="gene ID" value="ENSG00000118515.12"/>
</dbReference>
<dbReference type="Ensembl" id="ENST00000367857.9">
    <molecule id="O00141-4"/>
    <property type="protein sequence ID" value="ENSP00000356831.5"/>
    <property type="gene ID" value="ENSG00000118515.12"/>
</dbReference>
<dbReference type="Ensembl" id="ENST00000367858.10">
    <molecule id="O00141-2"/>
    <property type="protein sequence ID" value="ENSP00000356832.5"/>
    <property type="gene ID" value="ENSG00000118515.12"/>
</dbReference>
<dbReference type="Ensembl" id="ENST00000413996.7">
    <molecule id="O00141-3"/>
    <property type="protein sequence ID" value="ENSP00000396242.3"/>
    <property type="gene ID" value="ENSG00000118515.12"/>
</dbReference>
<dbReference type="Ensembl" id="ENST00000528577.5">
    <molecule id="O00141-5"/>
    <property type="protein sequence ID" value="ENSP00000434450.1"/>
    <property type="gene ID" value="ENSG00000118515.12"/>
</dbReference>
<dbReference type="GeneID" id="6446"/>
<dbReference type="KEGG" id="hsa:6446"/>
<dbReference type="MANE-Select" id="ENST00000367858.10">
    <molecule id="O00141-2"/>
    <property type="protein sequence ID" value="ENSP00000356832.5"/>
    <property type="RefSeq nucleotide sequence ID" value="NM_001143676.3"/>
    <property type="RefSeq protein sequence ID" value="NP_001137148.1"/>
</dbReference>
<dbReference type="UCSC" id="uc003qen.5">
    <molecule id="O00141-1"/>
    <property type="organism name" value="human"/>
</dbReference>
<dbReference type="AGR" id="HGNC:10810"/>
<dbReference type="CTD" id="6446"/>
<dbReference type="DisGeNET" id="6446"/>
<dbReference type="GeneCards" id="SGK1"/>
<dbReference type="HGNC" id="HGNC:10810">
    <property type="gene designation" value="SGK1"/>
</dbReference>
<dbReference type="HPA" id="ENSG00000118515">
    <property type="expression patterns" value="Tissue enhanced (parathyroid)"/>
</dbReference>
<dbReference type="MalaCards" id="SGK1"/>
<dbReference type="MIM" id="602958">
    <property type="type" value="gene"/>
</dbReference>
<dbReference type="neXtProt" id="NX_O00141"/>
<dbReference type="OpenTargets" id="ENSG00000118515"/>
<dbReference type="PharmGKB" id="PA162403013"/>
<dbReference type="VEuPathDB" id="HostDB:ENSG00000118515"/>
<dbReference type="eggNOG" id="KOG0598">
    <property type="taxonomic scope" value="Eukaryota"/>
</dbReference>
<dbReference type="GeneTree" id="ENSGT00940000155726"/>
<dbReference type="HOGENOM" id="CLU_000288_63_5_1"/>
<dbReference type="InParanoid" id="O00141"/>
<dbReference type="OMA" id="CVIYDMM"/>
<dbReference type="OrthoDB" id="63267at2759"/>
<dbReference type="PAN-GO" id="O00141">
    <property type="GO annotations" value="7 GO annotations based on evolutionary models"/>
</dbReference>
<dbReference type="PhylomeDB" id="O00141"/>
<dbReference type="TreeFam" id="TF320906"/>
<dbReference type="BRENDA" id="2.7.11.1">
    <property type="organism ID" value="2681"/>
</dbReference>
<dbReference type="PathwayCommons" id="O00141"/>
<dbReference type="Reactome" id="R-HSA-1257604">
    <property type="pathway name" value="PIP3 activates AKT signaling"/>
</dbReference>
<dbReference type="Reactome" id="R-HSA-2672351">
    <property type="pathway name" value="Stimuli-sensing channels"/>
</dbReference>
<dbReference type="Reactome" id="R-HSA-6804757">
    <property type="pathway name" value="Regulation of TP53 Degradation"/>
</dbReference>
<dbReference type="Reactome" id="R-HSA-8986944">
    <property type="pathway name" value="Transcriptional Regulation by MECP2"/>
</dbReference>
<dbReference type="Reactome" id="R-HSA-9031628">
    <property type="pathway name" value="NGF-stimulated transcription"/>
</dbReference>
<dbReference type="SignaLink" id="O00141"/>
<dbReference type="SIGNOR" id="O00141"/>
<dbReference type="BioGRID-ORCS" id="6446">
    <property type="hits" value="19 hits in 1198 CRISPR screens"/>
</dbReference>
<dbReference type="ChiTaRS" id="SGK1">
    <property type="organism name" value="human"/>
</dbReference>
<dbReference type="EvolutionaryTrace" id="O00141"/>
<dbReference type="GeneWiki" id="SGK"/>
<dbReference type="GenomeRNAi" id="6446"/>
<dbReference type="Pharos" id="O00141">
    <property type="development level" value="Tchem"/>
</dbReference>
<dbReference type="PRO" id="PR:O00141"/>
<dbReference type="Proteomes" id="UP000005640">
    <property type="component" value="Chromosome 6"/>
</dbReference>
<dbReference type="RNAct" id="O00141">
    <property type="molecule type" value="protein"/>
</dbReference>
<dbReference type="Bgee" id="ENSG00000118515">
    <property type="expression patterns" value="Expressed in palpebral conjunctiva and 200 other cell types or tissues"/>
</dbReference>
<dbReference type="ExpressionAtlas" id="O00141">
    <property type="expression patterns" value="baseline and differential"/>
</dbReference>
<dbReference type="GO" id="GO:0005737">
    <property type="term" value="C:cytoplasm"/>
    <property type="evidence" value="ECO:0000318"/>
    <property type="project" value="GO_Central"/>
</dbReference>
<dbReference type="GO" id="GO:0005829">
    <property type="term" value="C:cytosol"/>
    <property type="evidence" value="ECO:0000314"/>
    <property type="project" value="HPA"/>
</dbReference>
<dbReference type="GO" id="GO:0005789">
    <property type="term" value="C:endoplasmic reticulum membrane"/>
    <property type="evidence" value="ECO:0007669"/>
    <property type="project" value="UniProtKB-SubCell"/>
</dbReference>
<dbReference type="GO" id="GO:0005739">
    <property type="term" value="C:mitochondrion"/>
    <property type="evidence" value="ECO:0007669"/>
    <property type="project" value="UniProtKB-SubCell"/>
</dbReference>
<dbReference type="GO" id="GO:0016607">
    <property type="term" value="C:nuclear speck"/>
    <property type="evidence" value="ECO:0000314"/>
    <property type="project" value="HPA"/>
</dbReference>
<dbReference type="GO" id="GO:0005654">
    <property type="term" value="C:nucleoplasm"/>
    <property type="evidence" value="ECO:0000304"/>
    <property type="project" value="Reactome"/>
</dbReference>
<dbReference type="GO" id="GO:0005634">
    <property type="term" value="C:nucleus"/>
    <property type="evidence" value="ECO:0000318"/>
    <property type="project" value="GO_Central"/>
</dbReference>
<dbReference type="GO" id="GO:0005886">
    <property type="term" value="C:plasma membrane"/>
    <property type="evidence" value="ECO:0007669"/>
    <property type="project" value="UniProtKB-SubCell"/>
</dbReference>
<dbReference type="GO" id="GO:0005524">
    <property type="term" value="F:ATP binding"/>
    <property type="evidence" value="ECO:0007669"/>
    <property type="project" value="UniProtKB-KW"/>
</dbReference>
<dbReference type="GO" id="GO:0005246">
    <property type="term" value="F:calcium channel regulator activity"/>
    <property type="evidence" value="ECO:0000304"/>
    <property type="project" value="UniProtKB"/>
</dbReference>
<dbReference type="GO" id="GO:0017081">
    <property type="term" value="F:chloride channel regulator activity"/>
    <property type="evidence" value="ECO:0000304"/>
    <property type="project" value="UniProtKB"/>
</dbReference>
<dbReference type="GO" id="GO:0015459">
    <property type="term" value="F:potassium channel regulator activity"/>
    <property type="evidence" value="ECO:0000318"/>
    <property type="project" value="GO_Central"/>
</dbReference>
<dbReference type="GO" id="GO:0106310">
    <property type="term" value="F:protein serine kinase activity"/>
    <property type="evidence" value="ECO:0007669"/>
    <property type="project" value="RHEA"/>
</dbReference>
<dbReference type="GO" id="GO:0004674">
    <property type="term" value="F:protein serine/threonine kinase activity"/>
    <property type="evidence" value="ECO:0000318"/>
    <property type="project" value="GO_Central"/>
</dbReference>
<dbReference type="GO" id="GO:0004712">
    <property type="term" value="F:protein serine/threonine/tyrosine kinase activity"/>
    <property type="evidence" value="ECO:0000314"/>
    <property type="project" value="MGI"/>
</dbReference>
<dbReference type="GO" id="GO:0017080">
    <property type="term" value="F:sodium channel regulator activity"/>
    <property type="evidence" value="ECO:0000304"/>
    <property type="project" value="UniProtKB"/>
</dbReference>
<dbReference type="GO" id="GO:0006915">
    <property type="term" value="P:apoptotic process"/>
    <property type="evidence" value="ECO:0007669"/>
    <property type="project" value="UniProtKB-KW"/>
</dbReference>
<dbReference type="GO" id="GO:1904045">
    <property type="term" value="P:cellular response to aldosterone"/>
    <property type="evidence" value="ECO:0007669"/>
    <property type="project" value="Ensembl"/>
</dbReference>
<dbReference type="GO" id="GO:0006974">
    <property type="term" value="P:DNA damage response"/>
    <property type="evidence" value="ECO:0007669"/>
    <property type="project" value="Ensembl"/>
</dbReference>
<dbReference type="GO" id="GO:0035556">
    <property type="term" value="P:intracellular signal transduction"/>
    <property type="evidence" value="ECO:0000318"/>
    <property type="project" value="GO_Central"/>
</dbReference>
<dbReference type="GO" id="GO:0007616">
    <property type="term" value="P:long-term memory"/>
    <property type="evidence" value="ECO:0000304"/>
    <property type="project" value="UniProtKB"/>
</dbReference>
<dbReference type="GO" id="GO:0048812">
    <property type="term" value="P:neuron projection morphogenesis"/>
    <property type="evidence" value="ECO:0000318"/>
    <property type="project" value="GO_Central"/>
</dbReference>
<dbReference type="GO" id="GO:0032411">
    <property type="term" value="P:positive regulation of transporter activity"/>
    <property type="evidence" value="ECO:0000304"/>
    <property type="project" value="UniProtKB"/>
</dbReference>
<dbReference type="GO" id="GO:0006468">
    <property type="term" value="P:protein phosphorylation"/>
    <property type="evidence" value="ECO:0000304"/>
    <property type="project" value="ProtInc"/>
</dbReference>
<dbReference type="GO" id="GO:0042981">
    <property type="term" value="P:regulation of apoptotic process"/>
    <property type="evidence" value="ECO:0000304"/>
    <property type="project" value="UniProtKB"/>
</dbReference>
<dbReference type="GO" id="GO:0008217">
    <property type="term" value="P:regulation of blood pressure"/>
    <property type="evidence" value="ECO:0000304"/>
    <property type="project" value="UniProtKB"/>
</dbReference>
<dbReference type="GO" id="GO:0050790">
    <property type="term" value="P:regulation of catalytic activity"/>
    <property type="evidence" value="ECO:0000304"/>
    <property type="project" value="UniProtKB"/>
</dbReference>
<dbReference type="GO" id="GO:0001558">
    <property type="term" value="P:regulation of cell growth"/>
    <property type="evidence" value="ECO:0000304"/>
    <property type="project" value="UniProtKB"/>
</dbReference>
<dbReference type="GO" id="GO:0030334">
    <property type="term" value="P:regulation of cell migration"/>
    <property type="evidence" value="ECO:0000304"/>
    <property type="project" value="UniProtKB"/>
</dbReference>
<dbReference type="GO" id="GO:0042127">
    <property type="term" value="P:regulation of cell population proliferation"/>
    <property type="evidence" value="ECO:0000304"/>
    <property type="project" value="UniProtKB"/>
</dbReference>
<dbReference type="GO" id="GO:0051090">
    <property type="term" value="P:regulation of DNA-binding transcription factor activity"/>
    <property type="evidence" value="ECO:0000304"/>
    <property type="project" value="UniProtKB"/>
</dbReference>
<dbReference type="GO" id="GO:0060453">
    <property type="term" value="P:regulation of gastric acid secretion"/>
    <property type="evidence" value="ECO:0000304"/>
    <property type="project" value="UniProtKB"/>
</dbReference>
<dbReference type="GO" id="GO:1901796">
    <property type="term" value="P:regulation of signal transduction by p53 class mediator"/>
    <property type="evidence" value="ECO:0000304"/>
    <property type="project" value="Reactome"/>
</dbReference>
<dbReference type="GO" id="GO:0070294">
    <property type="term" value="P:renal sodium ion absorption"/>
    <property type="evidence" value="ECO:0000304"/>
    <property type="project" value="UniProtKB"/>
</dbReference>
<dbReference type="GO" id="GO:0006814">
    <property type="term" value="P:sodium ion transport"/>
    <property type="evidence" value="ECO:0000304"/>
    <property type="project" value="ProtInc"/>
</dbReference>
<dbReference type="CDD" id="cd05602">
    <property type="entry name" value="STKc_SGK1"/>
    <property type="match status" value="1"/>
</dbReference>
<dbReference type="FunFam" id="1.10.510.10:FF:000065">
    <property type="entry name" value="Non-specific serine/threonine protein kinase"/>
    <property type="match status" value="1"/>
</dbReference>
<dbReference type="FunFam" id="3.30.200.20:FF:000030">
    <property type="entry name" value="Non-specific serine/threonine protein kinase"/>
    <property type="match status" value="1"/>
</dbReference>
<dbReference type="Gene3D" id="3.30.200.20">
    <property type="entry name" value="Phosphorylase Kinase, domain 1"/>
    <property type="match status" value="1"/>
</dbReference>
<dbReference type="Gene3D" id="1.10.510.10">
    <property type="entry name" value="Transferase(Phosphotransferase) domain 1"/>
    <property type="match status" value="1"/>
</dbReference>
<dbReference type="InterPro" id="IPR000961">
    <property type="entry name" value="AGC-kinase_C"/>
</dbReference>
<dbReference type="InterPro" id="IPR011009">
    <property type="entry name" value="Kinase-like_dom_sf"/>
</dbReference>
<dbReference type="InterPro" id="IPR017892">
    <property type="entry name" value="Pkinase_C"/>
</dbReference>
<dbReference type="InterPro" id="IPR000719">
    <property type="entry name" value="Prot_kinase_dom"/>
</dbReference>
<dbReference type="InterPro" id="IPR017441">
    <property type="entry name" value="Protein_kinase_ATP_BS"/>
</dbReference>
<dbReference type="InterPro" id="IPR008271">
    <property type="entry name" value="Ser/Thr_kinase_AS"/>
</dbReference>
<dbReference type="PANTHER" id="PTHR24351">
    <property type="entry name" value="RIBOSOMAL PROTEIN S6 KINASE"/>
    <property type="match status" value="1"/>
</dbReference>
<dbReference type="Pfam" id="PF00069">
    <property type="entry name" value="Pkinase"/>
    <property type="match status" value="1"/>
</dbReference>
<dbReference type="Pfam" id="PF00433">
    <property type="entry name" value="Pkinase_C"/>
    <property type="match status" value="1"/>
</dbReference>
<dbReference type="SMART" id="SM00133">
    <property type="entry name" value="S_TK_X"/>
    <property type="match status" value="1"/>
</dbReference>
<dbReference type="SMART" id="SM00220">
    <property type="entry name" value="S_TKc"/>
    <property type="match status" value="1"/>
</dbReference>
<dbReference type="SUPFAM" id="SSF56112">
    <property type="entry name" value="Protein kinase-like (PK-like)"/>
    <property type="match status" value="1"/>
</dbReference>
<dbReference type="PROSITE" id="PS51285">
    <property type="entry name" value="AGC_KINASE_CTER"/>
    <property type="match status" value="1"/>
</dbReference>
<dbReference type="PROSITE" id="PS00107">
    <property type="entry name" value="PROTEIN_KINASE_ATP"/>
    <property type="match status" value="1"/>
</dbReference>
<dbReference type="PROSITE" id="PS50011">
    <property type="entry name" value="PROTEIN_KINASE_DOM"/>
    <property type="match status" value="1"/>
</dbReference>
<dbReference type="PROSITE" id="PS00108">
    <property type="entry name" value="PROTEIN_KINASE_ST"/>
    <property type="match status" value="1"/>
</dbReference>
<gene>
    <name type="primary">SGK1</name>
    <name type="synonym">SGK</name>
</gene>
<reference key="1">
    <citation type="journal article" date="1997" name="Proc. Natl. Acad. Sci. U.S.A.">
        <title>Cloning and characterization of a putative human serine/threonine protein kinase transcriptionally modified during anisotonic and isotonic alterations of cell volume.</title>
        <authorList>
            <person name="Waldegger S."/>
            <person name="Barth P."/>
            <person name="Raber G."/>
            <person name="Lang F."/>
        </authorList>
    </citation>
    <scope>NUCLEOTIDE SEQUENCE [MRNA] (ISOFORM 1)</scope>
</reference>
<reference key="2">
    <citation type="journal article" date="1998" name="Genomics">
        <title>Genomic organization and chromosomal localization of the human SGK protein kinase gene.</title>
        <authorList>
            <person name="Waldegger S."/>
            <person name="Erdel M."/>
            <person name="Nagl U.O."/>
            <person name="Barth P."/>
            <person name="Raber G."/>
            <person name="Steuer S."/>
            <person name="Utermann G."/>
            <person name="Paulmichl M."/>
            <person name="Lang F."/>
        </authorList>
    </citation>
    <scope>NUCLEOTIDE SEQUENCE [GENOMIC DNA]</scope>
    <scope>ALTERNATIVE SPLICING (ISOFORM 1)</scope>
</reference>
<reference key="3">
    <citation type="journal article" date="2008" name="Am. J. Physiol.">
        <title>An evolutionarily conserved N-terminal Sgk1 variant with enhanced stability and improved function.</title>
        <authorList>
            <person name="Raikwar N.S."/>
            <person name="Snyder P.M."/>
            <person name="Thomas C.P."/>
        </authorList>
    </citation>
    <scope>NUCLEOTIDE SEQUENCE [MRNA] (ISOFORM 2)</scope>
    <scope>FUNCTION</scope>
    <scope>ALTERNATIVE PROMOTER USAGE</scope>
    <scope>INDUCTION</scope>
    <scope>SUBCELLULAR LOCATION</scope>
    <scope>TISSUE SPECIFICITY</scope>
    <source>
        <tissue>Brain</tissue>
    </source>
</reference>
<reference key="4">
    <citation type="submission" date="2008-08" db="EMBL/GenBank/DDBJ databases">
        <title>Transcriptional variants of serum/glucocorticoid regulated kinase 1 show differential localisation and regulation.</title>
        <authorList>
            <person name="Hall B.A."/>
            <person name="Blakeley S."/>
            <person name="Daniels N.A."/>
            <person name="Jamieson D."/>
            <person name="Brickley D."/>
            <person name="Reynolds N.J."/>
            <person name="Conzen S.D."/>
            <person name="Jackson T.R."/>
        </authorList>
    </citation>
    <scope>NUCLEOTIDE SEQUENCE [MRNA] (ISOFORMS 2; 3; 4 AND 5)</scope>
    <scope>ALTERNATIVE PROMOTER USAGE</scope>
    <source>
        <tissue>Glioblastoma</tissue>
        <tissue>Hippocampus</tissue>
        <tissue>Skin</tissue>
    </source>
</reference>
<reference key="5">
    <citation type="submission" date="1999-05" db="EMBL/GenBank/DDBJ databases">
        <title>A catalogue of genes in the human dermal papilla cells as identified by expressed sequence tags.</title>
        <authorList>
            <person name="Kim M.K."/>
            <person name="Kim Y.H."/>
            <person name="Seo J.M."/>
            <person name="Lee H.M."/>
            <person name="Chung H.J."/>
            <person name="Sohn M.Y."/>
            <person name="Hwang S.Y."/>
            <person name="Im S.U."/>
            <person name="Jung E.J."/>
            <person name="Lee J.H."/>
            <person name="Kim J.C."/>
        </authorList>
    </citation>
    <scope>NUCLEOTIDE SEQUENCE [LARGE SCALE MRNA] (ISOFORM 1)</scope>
    <source>
        <tissue>Hair follicle dermal papilla</tissue>
    </source>
</reference>
<reference key="6">
    <citation type="journal article" date="2004" name="Nat. Genet.">
        <title>Complete sequencing and characterization of 21,243 full-length human cDNAs.</title>
        <authorList>
            <person name="Ota T."/>
            <person name="Suzuki Y."/>
            <person name="Nishikawa T."/>
            <person name="Otsuki T."/>
            <person name="Sugiyama T."/>
            <person name="Irie R."/>
            <person name="Wakamatsu A."/>
            <person name="Hayashi K."/>
            <person name="Sato H."/>
            <person name="Nagai K."/>
            <person name="Kimura K."/>
            <person name="Makita H."/>
            <person name="Sekine M."/>
            <person name="Obayashi M."/>
            <person name="Nishi T."/>
            <person name="Shibahara T."/>
            <person name="Tanaka T."/>
            <person name="Ishii S."/>
            <person name="Yamamoto J."/>
            <person name="Saito K."/>
            <person name="Kawai Y."/>
            <person name="Isono Y."/>
            <person name="Nakamura Y."/>
            <person name="Nagahari K."/>
            <person name="Murakami K."/>
            <person name="Yasuda T."/>
            <person name="Iwayanagi T."/>
            <person name="Wagatsuma M."/>
            <person name="Shiratori A."/>
            <person name="Sudo H."/>
            <person name="Hosoiri T."/>
            <person name="Kaku Y."/>
            <person name="Kodaira H."/>
            <person name="Kondo H."/>
            <person name="Sugawara M."/>
            <person name="Takahashi M."/>
            <person name="Kanda K."/>
            <person name="Yokoi T."/>
            <person name="Furuya T."/>
            <person name="Kikkawa E."/>
            <person name="Omura Y."/>
            <person name="Abe K."/>
            <person name="Kamihara K."/>
            <person name="Katsuta N."/>
            <person name="Sato K."/>
            <person name="Tanikawa M."/>
            <person name="Yamazaki M."/>
            <person name="Ninomiya K."/>
            <person name="Ishibashi T."/>
            <person name="Yamashita H."/>
            <person name="Murakawa K."/>
            <person name="Fujimori K."/>
            <person name="Tanai H."/>
            <person name="Kimata M."/>
            <person name="Watanabe M."/>
            <person name="Hiraoka S."/>
            <person name="Chiba Y."/>
            <person name="Ishida S."/>
            <person name="Ono Y."/>
            <person name="Takiguchi S."/>
            <person name="Watanabe S."/>
            <person name="Yosida M."/>
            <person name="Hotuta T."/>
            <person name="Kusano J."/>
            <person name="Kanehori K."/>
            <person name="Takahashi-Fujii A."/>
            <person name="Hara H."/>
            <person name="Tanase T.-O."/>
            <person name="Nomura Y."/>
            <person name="Togiya S."/>
            <person name="Komai F."/>
            <person name="Hara R."/>
            <person name="Takeuchi K."/>
            <person name="Arita M."/>
            <person name="Imose N."/>
            <person name="Musashino K."/>
            <person name="Yuuki H."/>
            <person name="Oshima A."/>
            <person name="Sasaki N."/>
            <person name="Aotsuka S."/>
            <person name="Yoshikawa Y."/>
            <person name="Matsunawa H."/>
            <person name="Ichihara T."/>
            <person name="Shiohata N."/>
            <person name="Sano S."/>
            <person name="Moriya S."/>
            <person name="Momiyama H."/>
            <person name="Satoh N."/>
            <person name="Takami S."/>
            <person name="Terashima Y."/>
            <person name="Suzuki O."/>
            <person name="Nakagawa S."/>
            <person name="Senoh A."/>
            <person name="Mizoguchi H."/>
            <person name="Goto Y."/>
            <person name="Shimizu F."/>
            <person name="Wakebe H."/>
            <person name="Hishigaki H."/>
            <person name="Watanabe T."/>
            <person name="Sugiyama A."/>
            <person name="Takemoto M."/>
            <person name="Kawakami B."/>
            <person name="Yamazaki M."/>
            <person name="Watanabe K."/>
            <person name="Kumagai A."/>
            <person name="Itakura S."/>
            <person name="Fukuzumi Y."/>
            <person name="Fujimori Y."/>
            <person name="Komiyama M."/>
            <person name="Tashiro H."/>
            <person name="Tanigami A."/>
            <person name="Fujiwara T."/>
            <person name="Ono T."/>
            <person name="Yamada K."/>
            <person name="Fujii Y."/>
            <person name="Ozaki K."/>
            <person name="Hirao M."/>
            <person name="Ohmori Y."/>
            <person name="Kawabata A."/>
            <person name="Hikiji T."/>
            <person name="Kobatake N."/>
            <person name="Inagaki H."/>
            <person name="Ikema Y."/>
            <person name="Okamoto S."/>
            <person name="Okitani R."/>
            <person name="Kawakami T."/>
            <person name="Noguchi S."/>
            <person name="Itoh T."/>
            <person name="Shigeta K."/>
            <person name="Senba T."/>
            <person name="Matsumura K."/>
            <person name="Nakajima Y."/>
            <person name="Mizuno T."/>
            <person name="Morinaga M."/>
            <person name="Sasaki M."/>
            <person name="Togashi T."/>
            <person name="Oyama M."/>
            <person name="Hata H."/>
            <person name="Watanabe M."/>
            <person name="Komatsu T."/>
            <person name="Mizushima-Sugano J."/>
            <person name="Satoh T."/>
            <person name="Shirai Y."/>
            <person name="Takahashi Y."/>
            <person name="Nakagawa K."/>
            <person name="Okumura K."/>
            <person name="Nagase T."/>
            <person name="Nomura N."/>
            <person name="Kikuchi H."/>
            <person name="Masuho Y."/>
            <person name="Yamashita R."/>
            <person name="Nakai K."/>
            <person name="Yada T."/>
            <person name="Nakamura Y."/>
            <person name="Ohara O."/>
            <person name="Isogai T."/>
            <person name="Sugano S."/>
        </authorList>
    </citation>
    <scope>NUCLEOTIDE SEQUENCE [LARGE SCALE MRNA] (ISOFORMS 2 AND 3)</scope>
    <source>
        <tissue>Brain</tissue>
    </source>
</reference>
<reference key="7">
    <citation type="journal article" date="2003" name="Nature">
        <title>The DNA sequence and analysis of human chromosome 6.</title>
        <authorList>
            <person name="Mungall A.J."/>
            <person name="Palmer S.A."/>
            <person name="Sims S.K."/>
            <person name="Edwards C.A."/>
            <person name="Ashurst J.L."/>
            <person name="Wilming L."/>
            <person name="Jones M.C."/>
            <person name="Horton R."/>
            <person name="Hunt S.E."/>
            <person name="Scott C.E."/>
            <person name="Gilbert J.G.R."/>
            <person name="Clamp M.E."/>
            <person name="Bethel G."/>
            <person name="Milne S."/>
            <person name="Ainscough R."/>
            <person name="Almeida J.P."/>
            <person name="Ambrose K.D."/>
            <person name="Andrews T.D."/>
            <person name="Ashwell R.I.S."/>
            <person name="Babbage A.K."/>
            <person name="Bagguley C.L."/>
            <person name="Bailey J."/>
            <person name="Banerjee R."/>
            <person name="Barker D.J."/>
            <person name="Barlow K.F."/>
            <person name="Bates K."/>
            <person name="Beare D.M."/>
            <person name="Beasley H."/>
            <person name="Beasley O."/>
            <person name="Bird C.P."/>
            <person name="Blakey S.E."/>
            <person name="Bray-Allen S."/>
            <person name="Brook J."/>
            <person name="Brown A.J."/>
            <person name="Brown J.Y."/>
            <person name="Burford D.C."/>
            <person name="Burrill W."/>
            <person name="Burton J."/>
            <person name="Carder C."/>
            <person name="Carter N.P."/>
            <person name="Chapman J.C."/>
            <person name="Clark S.Y."/>
            <person name="Clark G."/>
            <person name="Clee C.M."/>
            <person name="Clegg S."/>
            <person name="Cobley V."/>
            <person name="Collier R.E."/>
            <person name="Collins J.E."/>
            <person name="Colman L.K."/>
            <person name="Corby N.R."/>
            <person name="Coville G.J."/>
            <person name="Culley K.M."/>
            <person name="Dhami P."/>
            <person name="Davies J."/>
            <person name="Dunn M."/>
            <person name="Earthrowl M.E."/>
            <person name="Ellington A.E."/>
            <person name="Evans K.A."/>
            <person name="Faulkner L."/>
            <person name="Francis M.D."/>
            <person name="Frankish A."/>
            <person name="Frankland J."/>
            <person name="French L."/>
            <person name="Garner P."/>
            <person name="Garnett J."/>
            <person name="Ghori M.J."/>
            <person name="Gilby L.M."/>
            <person name="Gillson C.J."/>
            <person name="Glithero R.J."/>
            <person name="Grafham D.V."/>
            <person name="Grant M."/>
            <person name="Gribble S."/>
            <person name="Griffiths C."/>
            <person name="Griffiths M.N.D."/>
            <person name="Hall R."/>
            <person name="Halls K.S."/>
            <person name="Hammond S."/>
            <person name="Harley J.L."/>
            <person name="Hart E.A."/>
            <person name="Heath P.D."/>
            <person name="Heathcott R."/>
            <person name="Holmes S.J."/>
            <person name="Howden P.J."/>
            <person name="Howe K.L."/>
            <person name="Howell G.R."/>
            <person name="Huckle E."/>
            <person name="Humphray S.J."/>
            <person name="Humphries M.D."/>
            <person name="Hunt A.R."/>
            <person name="Johnson C.M."/>
            <person name="Joy A.A."/>
            <person name="Kay M."/>
            <person name="Keenan S.J."/>
            <person name="Kimberley A.M."/>
            <person name="King A."/>
            <person name="Laird G.K."/>
            <person name="Langford C."/>
            <person name="Lawlor S."/>
            <person name="Leongamornlert D.A."/>
            <person name="Leversha M."/>
            <person name="Lloyd C.R."/>
            <person name="Lloyd D.M."/>
            <person name="Loveland J.E."/>
            <person name="Lovell J."/>
            <person name="Martin S."/>
            <person name="Mashreghi-Mohammadi M."/>
            <person name="Maslen G.L."/>
            <person name="Matthews L."/>
            <person name="McCann O.T."/>
            <person name="McLaren S.J."/>
            <person name="McLay K."/>
            <person name="McMurray A."/>
            <person name="Moore M.J.F."/>
            <person name="Mullikin J.C."/>
            <person name="Niblett D."/>
            <person name="Nickerson T."/>
            <person name="Novik K.L."/>
            <person name="Oliver K."/>
            <person name="Overton-Larty E.K."/>
            <person name="Parker A."/>
            <person name="Patel R."/>
            <person name="Pearce A.V."/>
            <person name="Peck A.I."/>
            <person name="Phillimore B.J.C.T."/>
            <person name="Phillips S."/>
            <person name="Plumb R.W."/>
            <person name="Porter K.M."/>
            <person name="Ramsey Y."/>
            <person name="Ranby S.A."/>
            <person name="Rice C.M."/>
            <person name="Ross M.T."/>
            <person name="Searle S.M."/>
            <person name="Sehra H.K."/>
            <person name="Sheridan E."/>
            <person name="Skuce C.D."/>
            <person name="Smith S."/>
            <person name="Smith M."/>
            <person name="Spraggon L."/>
            <person name="Squares S.L."/>
            <person name="Steward C.A."/>
            <person name="Sycamore N."/>
            <person name="Tamlyn-Hall G."/>
            <person name="Tester J."/>
            <person name="Theaker A.J."/>
            <person name="Thomas D.W."/>
            <person name="Thorpe A."/>
            <person name="Tracey A."/>
            <person name="Tromans A."/>
            <person name="Tubby B."/>
            <person name="Wall M."/>
            <person name="Wallis J.M."/>
            <person name="West A.P."/>
            <person name="White S.S."/>
            <person name="Whitehead S.L."/>
            <person name="Whittaker H."/>
            <person name="Wild A."/>
            <person name="Willey D.J."/>
            <person name="Wilmer T.E."/>
            <person name="Wood J.M."/>
            <person name="Wray P.W."/>
            <person name="Wyatt J.C."/>
            <person name="Young L."/>
            <person name="Younger R.M."/>
            <person name="Bentley D.R."/>
            <person name="Coulson A."/>
            <person name="Durbin R.M."/>
            <person name="Hubbard T."/>
            <person name="Sulston J.E."/>
            <person name="Dunham I."/>
            <person name="Rogers J."/>
            <person name="Beck S."/>
        </authorList>
    </citation>
    <scope>NUCLEOTIDE SEQUENCE [LARGE SCALE GENOMIC DNA]</scope>
</reference>
<reference key="8">
    <citation type="submission" date="2005-09" db="EMBL/GenBank/DDBJ databases">
        <authorList>
            <person name="Mural R.J."/>
            <person name="Istrail S."/>
            <person name="Sutton G.G."/>
            <person name="Florea L."/>
            <person name="Halpern A.L."/>
            <person name="Mobarry C.M."/>
            <person name="Lippert R."/>
            <person name="Walenz B."/>
            <person name="Shatkay H."/>
            <person name="Dew I."/>
            <person name="Miller J.R."/>
            <person name="Flanigan M.J."/>
            <person name="Edwards N.J."/>
            <person name="Bolanos R."/>
            <person name="Fasulo D."/>
            <person name="Halldorsson B.V."/>
            <person name="Hannenhalli S."/>
            <person name="Turner R."/>
            <person name="Yooseph S."/>
            <person name="Lu F."/>
            <person name="Nusskern D.R."/>
            <person name="Shue B.C."/>
            <person name="Zheng X.H."/>
            <person name="Zhong F."/>
            <person name="Delcher A.L."/>
            <person name="Huson D.H."/>
            <person name="Kravitz S.A."/>
            <person name="Mouchard L."/>
            <person name="Reinert K."/>
            <person name="Remington K.A."/>
            <person name="Clark A.G."/>
            <person name="Waterman M.S."/>
            <person name="Eichler E.E."/>
            <person name="Adams M.D."/>
            <person name="Hunkapiller M.W."/>
            <person name="Myers E.W."/>
            <person name="Venter J.C."/>
        </authorList>
    </citation>
    <scope>NUCLEOTIDE SEQUENCE [LARGE SCALE GENOMIC DNA]</scope>
</reference>
<reference key="9">
    <citation type="journal article" date="2004" name="Genome Res.">
        <title>The status, quality, and expansion of the NIH full-length cDNA project: the Mammalian Gene Collection (MGC).</title>
        <authorList>
            <consortium name="The MGC Project Team"/>
        </authorList>
    </citation>
    <scope>NUCLEOTIDE SEQUENCE [LARGE SCALE MRNA] (ISOFORM 1)</scope>
    <source>
        <tissue>Cervix</tissue>
    </source>
</reference>
<reference key="10">
    <citation type="journal article" date="1999" name="Biochem. J.">
        <title>Characterization of the structure and regulation of two novel isoforms of serum- and glucocorticoid-induced protein kinase.</title>
        <authorList>
            <person name="Kobayashi T."/>
            <person name="Deak M."/>
            <person name="Morrice N."/>
            <person name="Cohen P."/>
        </authorList>
    </citation>
    <scope>TISSUE SPECIFICITY</scope>
</reference>
<reference key="11">
    <citation type="journal article" date="1999" name="Biochem. J.">
        <title>Activation of serum- and glucocorticoid-regulated protein kinase by agonists that activate phosphatidylinositide 3-kinase is mediated by 3-phosphoinositide-dependent protein kinase-1 (PDK1) and PDK2.</title>
        <authorList>
            <person name="Kobayashi T."/>
            <person name="Cohen P."/>
        </authorList>
    </citation>
    <scope>ACTIVITY REGULATION</scope>
    <scope>PHOSPHORYLATION AT THR-256 AND SER-422</scope>
    <scope>MUTAGENESIS OF THR-256 AND SER-422</scope>
    <source>
        <tissue>Brain</tissue>
    </source>
</reference>
<reference key="12">
    <citation type="journal article" date="2000" name="Proc. Natl. Acad. Sci. U.S.A.">
        <title>Deranged transcriptional regulation of cell-volume-sensitive kinase hSGK in diabetic nephropathy.</title>
        <authorList>
            <person name="Lang F."/>
            <person name="Klingel K."/>
            <person name="Wagner C.A."/>
            <person name="Stegen C."/>
            <person name="Waerntges S."/>
            <person name="Friedrich B."/>
            <person name="Lanzendoerfer M."/>
            <person name="Melzig J."/>
            <person name="Moschen I."/>
            <person name="Steuer S."/>
            <person name="Waldegger S."/>
            <person name="Sauter M."/>
            <person name="Paulmichl M."/>
            <person name="Gerke V."/>
            <person name="Risler T."/>
            <person name="Gamba G."/>
            <person name="Capasso G."/>
            <person name="Kandolf R."/>
            <person name="Hebert S.C."/>
            <person name="Massry S.G."/>
            <person name="Broer S."/>
        </authorList>
    </citation>
    <scope>CHARACTERIZATION</scope>
</reference>
<reference key="13">
    <citation type="journal article" date="2001" name="J. Biol. Chem.">
        <title>BMK1 mediates growth factor-induced cell proliferation through direct cellular activation of serum and glucocorticoid-inducible kinase.</title>
        <authorList>
            <person name="Hayashi M."/>
            <person name="Tapping R.I."/>
            <person name="Chao T.H."/>
            <person name="Lo J.F."/>
            <person name="King C.C."/>
            <person name="Yang Y."/>
            <person name="Lee J.D."/>
        </authorList>
    </citation>
    <scope>PHOSPHORYLATION AT SER-78 BY MAPK7</scope>
    <scope>INTERACTION WITH MAPK7</scope>
</reference>
<reference key="14">
    <citation type="journal article" date="2001" name="J. Biol. Chem.">
        <title>Activation of serum- and glucocorticoid-induced protein kinase (Sgk) by cyclic AMP and insulin.</title>
        <authorList>
            <person name="Perrotti N."/>
            <person name="He R.A."/>
            <person name="Phillips S.A."/>
            <person name="Haft C.R."/>
            <person name="Taylor S.I."/>
        </authorList>
    </citation>
    <scope>PHOSPHORYLATION AT THR-369 BY PKA</scope>
</reference>
<reference key="15">
    <citation type="journal article" date="2001" name="J. Biol. Chem.">
        <title>Serum- and glucocorticoid-inducible kinase SGK phosphorylates and negatively regulates B-Raf.</title>
        <authorList>
            <person name="Zhang B.H."/>
            <person name="Tang E.D."/>
            <person name="Zhu T."/>
            <person name="Greenberg M.E."/>
            <person name="Vojtek A.B."/>
            <person name="Guan K.L."/>
        </authorList>
    </citation>
    <scope>FUNCTION IN PHOSPHORYLATION OF BRAF</scope>
</reference>
<reference key="16">
    <citation type="journal article" date="2001" name="Mol. Cell. Biol.">
        <title>Protein kinase SGK mediates survival signals by phosphorylating the forkhead transcription factor FKHRL1 (FOXO3a).</title>
        <authorList>
            <person name="Brunet A."/>
            <person name="Park J."/>
            <person name="Tran H."/>
            <person name="Hu L.S."/>
            <person name="Hemmings B.A."/>
            <person name="Greenberg M.E."/>
        </authorList>
    </citation>
    <scope>FUNCTION</scope>
</reference>
<reference key="17">
    <citation type="journal article" date="2002" name="J. Biol. Chem.">
        <title>Serum and glucocorticoid-regulated kinase modulates Nedd4-2-mediated inhibition of the epithelial Na+ channel.</title>
        <authorList>
            <person name="Snyder P.M."/>
            <person name="Olson D.R."/>
            <person name="Thomas B.C."/>
        </authorList>
    </citation>
    <scope>INTERACTION WITH NEDD4 AND NEDD4L</scope>
    <scope>MUTAGENESIS OF LYS-127; TYR-298 AND SER-422</scope>
    <scope>FUNCTION</scope>
</reference>
<reference key="18">
    <citation type="journal article" date="2002" name="Kidney Blood Press. Res.">
        <title>Activation of Na+/K+-ATPase by the serum and glucocorticoid-dependent kinase isoforms.</title>
        <authorList>
            <person name="Henke G."/>
            <person name="Setiawan I."/>
            <person name="Boehmer C."/>
            <person name="Lang F."/>
        </authorList>
    </citation>
    <scope>FUNCTION IN REGULATION OF NA(+)/K(+) ATPASE</scope>
</reference>
<reference key="19">
    <citation type="journal article" date="2002" name="Pflugers Arch.">
        <title>K(+) channel activation by all three isoforms of serum- and glucocorticoid-dependent protein kinase SGK.</title>
        <authorList>
            <person name="Gamper N."/>
            <person name="Fillon S."/>
            <person name="Feng Y."/>
            <person name="Friedrich B."/>
            <person name="Lang P.A."/>
            <person name="Henke G."/>
            <person name="Huber S.M."/>
            <person name="Kobayashi T."/>
            <person name="Cohen P."/>
            <person name="Lang F."/>
        </authorList>
    </citation>
    <scope>FUNCTION</scope>
</reference>
<reference key="20">
    <citation type="journal article" date="2003" name="Biochem. Biophys. Res. Commun.">
        <title>Molecular requirements for the regulation of the renal outer medullary K(+) channel ROMK1 by the serum- and glucocorticoid-inducible kinase SGK1.</title>
        <authorList>
            <person name="Palmada M."/>
            <person name="Embark H.M."/>
            <person name="Yun C."/>
            <person name="Bohmer C."/>
            <person name="Lang F."/>
        </authorList>
    </citation>
    <scope>FUNCTION</scope>
    <scope>INTERACTION WITH SLC9A3R2/NHERF2 AND KCNJ1/ROMK1</scope>
</reference>
<reference key="21">
    <citation type="journal article" date="2003" name="Cardiovasc. Res.">
        <title>Serum and glucocorticoid inducible kinases in the regulation of the cardiac sodium channel SCN5A.</title>
        <authorList>
            <person name="Boehmer C."/>
            <person name="Wilhelm V."/>
            <person name="Palmada M."/>
            <person name="Wallisch S."/>
            <person name="Henke G."/>
            <person name="Brinkmeier H."/>
            <person name="Cohen P."/>
            <person name="Pieske B."/>
            <person name="Lang F."/>
        </authorList>
    </citation>
    <scope>FUNCTION IN REGULATION OF SCN5A</scope>
</reference>
<reference key="22">
    <citation type="journal article" date="2003" name="J. Biochem.">
        <title>Inhibition of mitogen-activated kinase kinase kinase 3 activity through phosphorylation by the serum- and glucocorticoid-induced kinase 1.</title>
        <authorList>
            <person name="Chun J."/>
            <person name="Kwon T."/>
            <person name="Kim D.J."/>
            <person name="Park I."/>
            <person name="Chung G."/>
            <person name="Lee E.J."/>
            <person name="Hong S.K."/>
            <person name="Chang S.I."/>
            <person name="Kim H.Y."/>
            <person name="Kang S.S."/>
        </authorList>
    </citation>
    <scope>FUNCTION IN PHOSPHORYLATION OF MAP3K3/MEKK3</scope>
</reference>
<reference key="23">
    <citation type="journal article" date="2003" name="J. Neurochem.">
        <title>Regulation of the glutamate transporter EAAT1 by the ubiquitin ligase Nedd4-2 and the serum and glucocorticoid-inducible kinase isoforms SGK1/3 and protein kinase B.</title>
        <authorList>
            <person name="Boehmer C."/>
            <person name="Henke G."/>
            <person name="Schniepp R."/>
            <person name="Palmada M."/>
            <person name="Rothstein J.D."/>
            <person name="Broeer S."/>
            <person name="Lang F."/>
        </authorList>
    </citation>
    <scope>FUNCTION IN REGULATION OF KCNA3/KV1.3</scope>
    <scope>MUTAGENESIS OF LYS-127 AND SER-422</scope>
</reference>
<reference key="24">
    <citation type="journal article" date="2003" name="Mol. Biol. Cell">
        <title>Importin-alpha mediates the regulated nuclear targeting of serum- and glucocorticoid-inducible protein kinase (Sgk) by recognition of a nuclear localization signal in the kinase central domain.</title>
        <authorList>
            <person name="Maiyar A.C."/>
            <person name="Leong M.L."/>
            <person name="Firestone G.L."/>
        </authorList>
    </citation>
    <scope>NUCLEAR LOCALIZATION SIGNAL</scope>
</reference>
<reference key="25">
    <citation type="journal article" date="2003" name="Pflugers Arch.">
        <title>Regulation of KCNE1-dependent K(+) current by the serum and glucocorticoid-inducible kinase (SGK) isoforms.</title>
        <authorList>
            <person name="Embark H.M."/>
            <person name="Boehmer C."/>
            <person name="Vallon V."/>
            <person name="Luft F."/>
            <person name="Lang F."/>
        </authorList>
    </citation>
    <scope>FUNCTION IN REGULATION OF KCNE1 AND KCNQ1</scope>
</reference>
<reference key="26">
    <citation type="journal article" date="2004" name="Am. J. Physiol.">
        <title>Regulation of intestinal phosphate cotransporter NaPi IIb by ubiquitin ligase Nedd4-2 and by serum- and glucocorticoid-dependent kinase 1.</title>
        <authorList>
            <person name="Palmada M."/>
            <person name="Dieter M."/>
            <person name="Speil A."/>
            <person name="Boehmer C."/>
            <person name="Mack A.F."/>
            <person name="Wagner H.J."/>
            <person name="Klingel K."/>
            <person name="Kandolf R."/>
            <person name="Murer H."/>
            <person name="Biber J."/>
            <person name="Closs E.I."/>
            <person name="Lang F."/>
        </authorList>
    </citation>
    <scope>FUNCTION IN REGULATION OF SLC34A2/NAPI-2B</scope>
    <scope>FUNCTION IN PHOSPHORYLATION OF NEDD4L</scope>
</reference>
<reference key="27">
    <citation type="journal article" date="2004" name="Biochem. Biophys. Res. Commun.">
        <title>Stimulation of renal Na+ dicarboxylate cotransporter 1 by Na+/H+ exchanger regulating factor 2, serum and glucocorticoid inducible kinase isoforms, and protein kinase B.</title>
        <authorList>
            <person name="Boehmer C."/>
            <person name="Embark H.M."/>
            <person name="Bauer A."/>
            <person name="Palmada M."/>
            <person name="Yun C.H."/>
            <person name="Weinman E.J."/>
            <person name="Endou H."/>
            <person name="Cohen P."/>
            <person name="Lahme S."/>
            <person name="Bichler K.H."/>
            <person name="Lang F."/>
        </authorList>
    </citation>
    <scope>FUNCTION IN REGULATION OF SLC13A2/NADC1</scope>
</reference>
<reference key="28">
    <citation type="journal article" date="2004" name="Cell. Physiol. Biochem.">
        <title>Regulation of the epithelial Ca2+ channel TRPV5 by the NHE regulating factor NHERF2 and the serum and glucocorticoid inducible kinase isoforms SGK1 and SGK3 expressed in Xenopus oocytes.</title>
        <authorList>
            <person name="Embark H.M."/>
            <person name="Setiawan I."/>
            <person name="Poppendieck S."/>
            <person name="van de Graaf S.F."/>
            <person name="Boehmer C."/>
            <person name="Palmada M."/>
            <person name="Wieder T."/>
            <person name="Gerstberger R."/>
            <person name="Cohen P."/>
            <person name="Yun C.C."/>
            <person name="Bindels R.J."/>
            <person name="Lang F."/>
        </authorList>
    </citation>
    <scope>FUNCTION IN REGULATION OF TRPV5</scope>
</reference>
<reference key="29">
    <citation type="journal article" date="2004" name="J. Biol. Chem.">
        <title>A novel pathway of epithelial sodium channel activation involves a serum- and glucocorticoid-inducible kinase consensus motif in the C terminus of the channel's alpha-subunit.</title>
        <authorList>
            <person name="Diakov A."/>
            <person name="Korbmacher C."/>
        </authorList>
    </citation>
    <scope>FUNCTION</scope>
</reference>
<reference key="30">
    <citation type="journal article" date="2004" name="J. Cell. Physiol.">
        <title>Regulation of the voltage gated K+ channel Kv1.3 by the ubiquitin ligase Nedd4-2 and the serum and glucocorticoid inducible kinase SGK1.</title>
        <authorList>
            <person name="Henke G."/>
            <person name="Maier G."/>
            <person name="Wallisch S."/>
            <person name="Boehmer C."/>
            <person name="Lang F."/>
        </authorList>
    </citation>
    <scope>FUNCTION</scope>
    <scope>MUTAGENESIS OF LYS-127 AND SER-422</scope>
</reference>
<reference key="31">
    <citation type="journal article" date="2004" name="Kidney Int.">
        <title>Regulation of CLC-Ka/barttin by the ubiquitin ligase Nedd4-2 and the serum- and glucocorticoid-dependent kinases.</title>
        <authorList>
            <person name="Embark H.M."/>
            <person name="Boehmer C."/>
            <person name="Palmada M."/>
            <person name="Rajamanickam J."/>
            <person name="Wyatt A.W."/>
            <person name="Wallisch S."/>
            <person name="Capasso G."/>
            <person name="Waldegger P."/>
            <person name="Seyberth H.W."/>
            <person name="Waldegger S."/>
            <person name="Lang F."/>
        </authorList>
    </citation>
    <scope>FUNCTION IN REGULATION OF BSND</scope>
</reference>
<reference key="32">
    <citation type="journal article" date="2005" name="Am. J. Physiol.">
        <title>Activation of NHE3 by dexamethasone requires phosphorylation of NHE3 at Ser663 by SGK1.</title>
        <authorList>
            <person name="Wang D."/>
            <person name="Sun H."/>
            <person name="Lang F."/>
            <person name="Yun C.C."/>
        </authorList>
    </citation>
    <scope>FUNCTION IN PHOSPHORYLATION OF SLC9A3/NHE3</scope>
</reference>
<reference key="33">
    <citation type="journal article" date="2005" name="Biochem. Biophys. Res. Commun.">
        <title>The serine/threonine kinases SGK1, 3 and PKB stimulate the amino acid transporter ASCT2.</title>
        <authorList>
            <person name="Palmada M."/>
            <person name="Speil A."/>
            <person name="Jeyaraj S."/>
            <person name="Boehmer C."/>
            <person name="Lang F."/>
        </authorList>
    </citation>
    <scope>FUNCTION IN REGULATION OF SLC1A5/ASCT2</scope>
</reference>
<reference key="34">
    <citation type="journal article" date="2005" name="Biochem. Biophys. Res. Commun.">
        <title>Regulation of the excitatory amino acid transporter EAAT5 by the serum and glucocorticoid dependent kinases SGK1 and SGK3.</title>
        <authorList>
            <person name="Boehmer C."/>
            <person name="Rajamanickam J."/>
            <person name="Schniepp R."/>
            <person name="Kohler K."/>
            <person name="Wulff P."/>
            <person name="Kuhl D."/>
            <person name="Palmada M."/>
            <person name="Lang F."/>
        </authorList>
    </citation>
    <scope>FUNCTION IN REGULATION OF SLC1A7/EAAT5</scope>
</reference>
<reference key="35">
    <citation type="journal article" date="2005" name="Biochem. Biophys. Res. Commun.">
        <title>Stimulation of the creatine transporter SLC6A8 by the protein kinases SGK1 and SGK3.</title>
        <authorList>
            <person name="Shojaiefard M."/>
            <person name="Christie D.L."/>
            <person name="Lang F."/>
        </authorList>
    </citation>
    <scope>FUNCTION IN REGULATION OF SLC6A8</scope>
</reference>
<reference key="36">
    <citation type="journal article" date="2005" name="FEBS Lett.">
        <title>Serum/glucocorticoid-inducible kinase can phosphorylate the cyclic AMP response element binding protein, CREB.</title>
        <authorList>
            <person name="David S."/>
            <person name="Kalb R.G."/>
        </authorList>
    </citation>
    <scope>FUNCTION IN PHOSPHORYLATION OF CREB1</scope>
    <scope>INTERACTION WITH CREB1</scope>
</reference>
<reference key="37">
    <citation type="journal article" date="2005" name="J. Biol. Chem.">
        <title>Nedd4-2 phosphorylation induces serum and glucocorticoid-regulated kinase (SGK) ubiquitination and degradation.</title>
        <authorList>
            <person name="Zhou R."/>
            <person name="Snyder P.M."/>
        </authorList>
    </citation>
    <scope>UBIQUITINATION</scope>
</reference>
<reference key="38">
    <citation type="journal article" date="2006" name="Diabetes">
        <title>SGK1 kinase upregulates GLUT1 activity and plasma membrane expression.</title>
        <authorList>
            <person name="Palmada M."/>
            <person name="Boehmer C."/>
            <person name="Akel A."/>
            <person name="Rajamanickam J."/>
            <person name="Jeyaraj S."/>
            <person name="Keller K."/>
            <person name="Lang F."/>
        </authorList>
    </citation>
    <scope>FUNCTION IN REGULATION OF SLC2A1/GLUT1</scope>
</reference>
<reference key="39">
    <citation type="journal article" date="2006" name="Mol. Cell. Biol.">
        <title>Serum- and glucocorticoid-inducible kinase 1 (SGK1) increases neurite formation through microtubule depolymerization by SGK1 and by SGK1 phosphorylation of tau.</title>
        <authorList>
            <person name="Yang Y.C."/>
            <person name="Lin C.H."/>
            <person name="Lee E.H."/>
        </authorList>
    </citation>
    <scope>FUNCTION IN PHOSPHORYLATION OF MAPT/TAU</scope>
    <scope>INTERACTION WITH MAPT/TAU</scope>
</reference>
<reference key="40">
    <citation type="journal article" date="2007" name="Am. J. Physiol.">
        <title>Subcellular location of serum- and glucocorticoid-induced kinase-1 in renal and mammary epithelial cells.</title>
        <authorList>
            <person name="Cordas E."/>
            <person name="Naray-Fejes-Toth A."/>
            <person name="Fejes-Toth G."/>
        </authorList>
    </citation>
    <scope>SUBCELLULAR LOCATION</scope>
</reference>
<reference key="41">
    <citation type="journal article" date="2007" name="Biochem. Biophys. Res. Commun.">
        <title>Role of SGK1 kinase in regulating glucose transport via glucose transporter GLUT4.</title>
        <authorList>
            <person name="Jeyaraj S."/>
            <person name="Boehmer C."/>
            <person name="Lang F."/>
            <person name="Palmada M."/>
        </authorList>
    </citation>
    <scope>FUNCTION IN PHOSPHORYLATION OF SLC2A4/GLUT4</scope>
</reference>
<reference key="42">
    <citation type="journal article" date="2007" name="FEBS Lett.">
        <title>Regulation of the epithelial calcium channel TRPV6 by the serum and glucocorticoid-inducible kinase isoforms SGK1 and SGK3.</title>
        <authorList>
            <person name="Boehmer C."/>
            <person name="Palmada M."/>
            <person name="Kenngott C."/>
            <person name="Lindner R."/>
            <person name="Klaus F."/>
            <person name="Laufer J."/>
            <person name="Lang F."/>
        </authorList>
    </citation>
    <scope>FUNCTION IN REGULATION OF TRPV6</scope>
</reference>
<reference key="43">
    <citation type="journal article" date="2008" name="BMB Rep.">
        <title>Regulation Fe65 localization to the nucleus by SGK1 phosphorylation of its Ser566 residue.</title>
        <authorList>
            <person name="Lee E.J."/>
            <person name="Chun J."/>
            <person name="Hyun S."/>
            <person name="Ahn H.R."/>
            <person name="Jeong J.M."/>
            <person name="Hong S.K."/>
            <person name="Hong J.T."/>
            <person name="Chang I.K."/>
            <person name="Jeon H.Y."/>
            <person name="Han Y.S."/>
            <person name="Auh C.K."/>
            <person name="Park J.I."/>
            <person name="Kang S.S."/>
        </authorList>
    </citation>
    <scope>FUNCTION IN PHOSPHORYLATION OF APBB1/FE65</scope>
</reference>
<reference key="44">
    <citation type="journal article" date="2008" name="Biochem. J.">
        <title>mTOR complex 2 (mTORC2) controls hydrophobic motif phosphorylation and activation of serum- and glucocorticoid-induced protein kinase 1 (SGK1).</title>
        <authorList>
            <person name="Garcia-Martinez J.M."/>
            <person name="Alessi D.R."/>
        </authorList>
    </citation>
    <scope>PHOSPHORYLATION AT SER-422 BY MTORC2</scope>
</reference>
<reference key="45">
    <citation type="journal article" date="2008" name="Mol. Cell">
        <title>Kinase-selective enrichment enables quantitative phosphoproteomics of the kinome across the cell cycle.</title>
        <authorList>
            <person name="Daub H."/>
            <person name="Olsen J.V."/>
            <person name="Bairlein M."/>
            <person name="Gnad F."/>
            <person name="Oppermann F.S."/>
            <person name="Korner R."/>
            <person name="Greff Z."/>
            <person name="Keri G."/>
            <person name="Stemmann O."/>
            <person name="Mann M."/>
        </authorList>
    </citation>
    <scope>PHOSPHORYLATION [LARGE SCALE ANALYSIS] AT SER-74; SER-397 AND SER-401</scope>
    <scope>IDENTIFICATION BY MASS SPECTROMETRY [LARGE SCALE ANALYSIS]</scope>
    <source>
        <tissue>Cervix carcinoma</tissue>
    </source>
</reference>
<reference key="46">
    <citation type="journal article" date="2008" name="Proc. Natl. Acad. Sci. U.S.A.">
        <title>A brain-specific SGK1 splice isoform regulates expression of ASIC1 in neurons.</title>
        <authorList>
            <person name="Arteaga M.F."/>
            <person name="Coric T."/>
            <person name="Straub C."/>
            <person name="Canessa C.M."/>
        </authorList>
    </citation>
    <scope>ALTERNATIVE PROMOTER USAGE (ISOFORMS 2 AND 3)</scope>
</reference>
<reference key="47">
    <citation type="journal article" date="2009" name="J. Biol. Chem.">
        <title>Regulation of a third conserved phosphorylation site in SGK1.</title>
        <authorList>
            <person name="Chen W."/>
            <person name="Chen Y."/>
            <person name="Xu B.E."/>
            <person name="Juang Y.C."/>
            <person name="Stippec S."/>
            <person name="Zhao Y."/>
            <person name="Cobb M.H."/>
        </authorList>
    </citation>
    <scope>ACTIVITY REGULATION</scope>
    <scope>PHOSPHORYLATION AT SER-397 AND SER-401</scope>
</reference>
<reference key="48">
    <citation type="journal article" date="2009" name="J. Hepatol.">
        <title>Protein kinase SGK1 enhances MEK/ERK complex formation through the phosphorylation of ERK2: implication for the positive regulatory role of SGK1 on the ERK function during liver regeneration.</title>
        <authorList>
            <person name="Won M."/>
            <person name="Park K.A."/>
            <person name="Byun H.S."/>
            <person name="Kim Y.R."/>
            <person name="Choi B.L."/>
            <person name="Hong J.H."/>
            <person name="Park J."/>
            <person name="Seok J.H."/>
            <person name="Lee Y.H."/>
            <person name="Cho C.H."/>
            <person name="Song I.S."/>
            <person name="Kim Y.K."/>
            <person name="Shen H.M."/>
            <person name="Hur G.M."/>
        </authorList>
    </citation>
    <scope>FUNCTION IN PHOSPHORYLATION OF MAPK1/ERK2</scope>
    <scope>INTERACTION WITH MAPK3/ERK1; MAPK1/ERK2; MAP2K1/MEK1 AND MAP2K2/MEK2</scope>
</reference>
<reference key="49">
    <citation type="journal article" date="2009" name="J. Mol. Med.">
        <title>Sgk1 activates MDM2-dependent p53 degradation and affects cell proliferation, survival, and differentiation.</title>
        <authorList>
            <person name="Amato R."/>
            <person name="D'Antona L."/>
            <person name="Porciatti G."/>
            <person name="Agosti V."/>
            <person name="Menniti M."/>
            <person name="Rinaldo C."/>
            <person name="Costa N."/>
            <person name="Bellacchio E."/>
            <person name="Mattarocci S."/>
            <person name="Fuiano G."/>
            <person name="Soddu S."/>
            <person name="Paggi M.G."/>
            <person name="Lang F."/>
            <person name="Perrotti N."/>
        </authorList>
    </citation>
    <scope>FUNCTION IN PHOSPHORYLATION OF MDM2</scope>
</reference>
<reference key="50">
    <citation type="journal article" date="2009" name="Mol. Cell. Proteomics">
        <title>Large-scale proteomics analysis of the human kinome.</title>
        <authorList>
            <person name="Oppermann F.S."/>
            <person name="Gnad F."/>
            <person name="Olsen J.V."/>
            <person name="Hornberger R."/>
            <person name="Greff Z."/>
            <person name="Keri G."/>
            <person name="Mann M."/>
            <person name="Daub H."/>
        </authorList>
    </citation>
    <scope>PHOSPHORYLATION [LARGE SCALE ANALYSIS] AT SER-74; SER-397 AND SER-401</scope>
    <scope>IDENTIFICATION BY MASS SPECTROMETRY [LARGE SCALE ANALYSIS]</scope>
</reference>
<reference key="51">
    <citation type="journal article" date="2010" name="Cell. Physiol. Biochem.">
        <title>The serum and glucocorticoid inducible kinases SGK1-3 stimulate the neutral amino acid transporter SLC6A19.</title>
        <authorList>
            <person name="Boehmer C."/>
            <person name="Sopjani M."/>
            <person name="Klaus F."/>
            <person name="Lindner R."/>
            <person name="Laufer J."/>
            <person name="Jeyaraj S."/>
            <person name="Lang F."/>
            <person name="Palmada M."/>
        </authorList>
    </citation>
    <scope>FUNCTION IN REGULATION OF SLC6A19</scope>
</reference>
<reference key="52">
    <citation type="journal article" date="2010" name="J. Am. Soc. Nephrol.">
        <title>mTOR complex-2 activates ENaC by phosphorylating SGK1.</title>
        <authorList>
            <person name="Lu M."/>
            <person name="Wang J."/>
            <person name="Jones K.T."/>
            <person name="Ives H.E."/>
            <person name="Feldman M.E."/>
            <person name="Yao L.J."/>
            <person name="Shokat K.M."/>
            <person name="Ashrafi K."/>
            <person name="Pearce D."/>
        </authorList>
    </citation>
    <scope>PHOSPHORYLATION AT SER-422 BY MTORC2</scope>
    <scope>INTERACTION WITH MTORC2</scope>
</reference>
<reference key="53">
    <citation type="journal article" date="2010" name="PLoS ONE">
        <title>Interaction of serum- and glucocorticoid regulated kinase 1 (SGK1) with the WW-domains of Nedd4-2 is required for epithelial sodium channel regulation.</title>
        <authorList>
            <person name="Wiemuth D."/>
            <person name="Lott J.S."/>
            <person name="Ly K."/>
            <person name="Ke Y."/>
            <person name="Teesdale-Spittle P."/>
            <person name="Snyder P.M."/>
            <person name="McDonald F.J."/>
        </authorList>
    </citation>
    <scope>FUNCTION</scope>
</reference>
<reference key="54">
    <citation type="journal article" date="2010" name="Sci. Signal.">
        <title>Quantitative phosphoproteomics reveals widespread full phosphorylation site occupancy during mitosis.</title>
        <authorList>
            <person name="Olsen J.V."/>
            <person name="Vermeulen M."/>
            <person name="Santamaria A."/>
            <person name="Kumar C."/>
            <person name="Miller M.L."/>
            <person name="Jensen L.J."/>
            <person name="Gnad F."/>
            <person name="Cox J."/>
            <person name="Jensen T.S."/>
            <person name="Nigg E.A."/>
            <person name="Brunak S."/>
            <person name="Mann M."/>
        </authorList>
    </citation>
    <scope>PHOSPHORYLATION [LARGE SCALE ANALYSIS] AT SER-397</scope>
    <scope>IDENTIFICATION BY MASS SPECTROMETRY [LARGE SCALE ANALYSIS]</scope>
    <source>
        <tissue>Cervix carcinoma</tissue>
    </source>
</reference>
<reference key="55">
    <citation type="journal article" date="2011" name="Mol. Biol. Cell">
        <title>Serum- and glucocorticoid-induced kinase 3 in recycling endosomes mediates acute activation of Na+/H+ exchanger NHE3 by glucocorticoids.</title>
        <authorList>
            <person name="He P."/>
            <person name="Lee S.J."/>
            <person name="Lin S."/>
            <person name="Seidler U."/>
            <person name="Lang F."/>
            <person name="Fejes-Toth G."/>
            <person name="Naray-Fejes-Toth A."/>
            <person name="Yun C.C."/>
        </authorList>
    </citation>
    <scope>FUNCTION IN REGULATION OF SLC9A3/NHE3</scope>
    <scope>SUBCELLULAR LOCATION</scope>
</reference>
<reference key="56">
    <citation type="journal article" date="2022" name="J. Cell Sci.">
        <title>WNK1 is a chloride-stimulated scaffold that regulates mTORC2 activity and ion transport.</title>
        <authorList>
            <person name="Saha B."/>
            <person name="Leite-Dellova D.C.A."/>
            <person name="Demko J."/>
            <person name="Soerensen M.V."/>
            <person name="Takagi E."/>
            <person name="Gleason C.E."/>
            <person name="Shabbir W."/>
            <person name="Pearce D."/>
        </authorList>
    </citation>
    <scope>ACTIVITY REGULATION</scope>
    <scope>PHOSPHORYLATION</scope>
</reference>
<reference key="57">
    <citation type="journal article" date="2003" name="Cell. Physiol. Biochem.">
        <title>Stimulus-dependent regulation of serum and glucocorticoid inducible protein kinase (SGK) transcription, subcellular localization and enzymatic activity.</title>
        <authorList>
            <person name="Firestone G.L."/>
            <person name="Giampaolo J.R."/>
            <person name="O'Keeffe B.A."/>
        </authorList>
    </citation>
    <scope>REVIEW</scope>
</reference>
<reference key="58">
    <citation type="journal article" date="2006" name="Annu. Rev. Physiol.">
        <title>Sgk kinases and their role in epithelial transport.</title>
        <authorList>
            <person name="Loffing J."/>
            <person name="Flores S.Y."/>
            <person name="Staub O."/>
        </authorList>
    </citation>
    <scope>REVIEW</scope>
</reference>
<reference key="59">
    <citation type="journal article" date="2010" name="Growth Factors">
        <title>Second AKT: the rise of SGK in cancer signalling.</title>
        <authorList>
            <person name="Bruhn M.A."/>
            <person name="Pearson R.B."/>
            <person name="Hannan R.D."/>
            <person name="Sheppard K.E."/>
        </authorList>
    </citation>
    <scope>REVIEW ON FUNCTION</scope>
</reference>
<reference key="60">
    <citation type="journal article" date="2010" name="J. Physiol. (Lond.)">
        <title>Significance of SGK1 in the regulation of neuronal function.</title>
        <authorList>
            <person name="Lang F."/>
            <person name="Strutz-Seebohm N."/>
            <person name="Seebohm G."/>
            <person name="Lang U.E."/>
        </authorList>
    </citation>
    <scope>REVIEW ON FUNCTION</scope>
</reference>
<reference key="61">
    <citation type="journal article" date="2007" name="Protein Sci.">
        <title>Crystal structure of the kinase domain of serum and glucocorticoid-regulated kinase 1 in complex with AMP PNP.</title>
        <authorList>
            <person name="Zhao B."/>
            <person name="Lehr R."/>
            <person name="Smallwood A.M."/>
            <person name="Ho T.F."/>
            <person name="Maley K."/>
            <person name="Randall T."/>
            <person name="Head M.S."/>
            <person name="Koretke K.K."/>
            <person name="Schnackenberg C.G."/>
        </authorList>
    </citation>
    <scope>X-RAY CRYSTALLOGRAPHY (1.90 ANGSTROMS) OF 60-431</scope>
    <scope>SUBUNIT</scope>
    <scope>DISULFIDE BOND</scope>
</reference>
<reference key="62">
    <citation type="journal article" date="2007" name="Nature">
        <title>Patterns of somatic mutation in human cancer genomes.</title>
        <authorList>
            <person name="Greenman C."/>
            <person name="Stephens P."/>
            <person name="Smith R."/>
            <person name="Dalgliesh G.L."/>
            <person name="Hunter C."/>
            <person name="Bignell G."/>
            <person name="Davies H."/>
            <person name="Teague J."/>
            <person name="Butler A."/>
            <person name="Stevens C."/>
            <person name="Edkins S."/>
            <person name="O'Meara S."/>
            <person name="Vastrik I."/>
            <person name="Schmidt E.E."/>
            <person name="Avis T."/>
            <person name="Barthorpe S."/>
            <person name="Bhamra G."/>
            <person name="Buck G."/>
            <person name="Choudhury B."/>
            <person name="Clements J."/>
            <person name="Cole J."/>
            <person name="Dicks E."/>
            <person name="Forbes S."/>
            <person name="Gray K."/>
            <person name="Halliday K."/>
            <person name="Harrison R."/>
            <person name="Hills K."/>
            <person name="Hinton J."/>
            <person name="Jenkinson A."/>
            <person name="Jones D."/>
            <person name="Menzies A."/>
            <person name="Mironenko T."/>
            <person name="Perry J."/>
            <person name="Raine K."/>
            <person name="Richardson D."/>
            <person name="Shepherd R."/>
            <person name="Small A."/>
            <person name="Tofts C."/>
            <person name="Varian J."/>
            <person name="Webb T."/>
            <person name="West S."/>
            <person name="Widaa S."/>
            <person name="Yates A."/>
            <person name="Cahill D.P."/>
            <person name="Louis D.N."/>
            <person name="Goldstraw P."/>
            <person name="Nicholson A.G."/>
            <person name="Brasseur F."/>
            <person name="Looijenga L."/>
            <person name="Weber B.L."/>
            <person name="Chiew Y.-E."/>
            <person name="DeFazio A."/>
            <person name="Greaves M.F."/>
            <person name="Green A.R."/>
            <person name="Campbell P."/>
            <person name="Birney E."/>
            <person name="Easton D.F."/>
            <person name="Chenevix-Trench G."/>
            <person name="Tan M.-H."/>
            <person name="Khoo S.K."/>
            <person name="Teh B.T."/>
            <person name="Yuen S.T."/>
            <person name="Leung S.Y."/>
            <person name="Wooster R."/>
            <person name="Futreal P.A."/>
            <person name="Stratton M.R."/>
        </authorList>
    </citation>
    <scope>VARIANTS [LARGE SCALE ANALYSIS] ILE-219 AND VAL-342</scope>
</reference>
<keyword id="KW-0002">3D-structure</keyword>
<keyword id="KW-0877">Alternative promoter usage</keyword>
<keyword id="KW-0025">Alternative splicing</keyword>
<keyword id="KW-0053">Apoptosis</keyword>
<keyword id="KW-0067">ATP-binding</keyword>
<keyword id="KW-1003">Cell membrane</keyword>
<keyword id="KW-0963">Cytoplasm</keyword>
<keyword id="KW-1015">Disulfide bond</keyword>
<keyword id="KW-0256">Endoplasmic reticulum</keyword>
<keyword id="KW-0418">Kinase</keyword>
<keyword id="KW-0472">Membrane</keyword>
<keyword id="KW-0496">Mitochondrion</keyword>
<keyword id="KW-0547">Nucleotide-binding</keyword>
<keyword id="KW-0539">Nucleus</keyword>
<keyword id="KW-0597">Phosphoprotein</keyword>
<keyword id="KW-1267">Proteomics identification</keyword>
<keyword id="KW-1185">Reference proteome</keyword>
<keyword id="KW-0723">Serine/threonine-protein kinase</keyword>
<keyword id="KW-0346">Stress response</keyword>
<keyword id="KW-0808">Transferase</keyword>
<keyword id="KW-0832">Ubl conjugation</keyword>
<comment type="function">
    <text evidence="7 9 10 11 12 14 15 16 17 18 19 20 21 22 23 24 26 27 28 29 30 31 32 34 36 37 38 41 42 44 45 46">Serine/threonine-protein kinase which is involved in the regulation of a wide variety of ion channels, membrane transporters, cellular enzymes, transcription factors, neuronal excitability, cell growth, proliferation, survival, migration and apoptosis. Plays an important role in cellular stress response. Contributes to regulation of renal Na(+) retention, renal K(+) elimination, salt appetite, gastric acid secretion, intestinal Na(+)/H(+) exchange and nutrient transport, insulin-dependent salt sensitivity of blood pressure, salt sensitivity of peripheral glucose uptake, cardiac repolarization and memory consolidation. Up-regulates Na(+) channels: SCNN1A/ENAC, SCN5A and ASIC1/ACCN2, K(+) channels: KCNJ1/ROMK1, KCNA1-5, KCNQ1-5 and KCNE1, epithelial Ca(2+) channels: TRPV5 and TRPV6, chloride channels: BSND, CLCN2 and CFTR, glutamate transporters: SLC1A3/EAAT1, SLC1A2 /EAAT2, SLC1A1/EAAT3, SLC1A6/EAAT4 and SLC1A7/EAAT5, amino acid transporters: SLC1A5/ASCT2, SLC38A1/SN1 and SLC6A19, creatine transporter: SLC6A8, Na(+)/dicarboxylate cotransporter: SLC13A2/NADC1, Na(+)-dependent phosphate cotransporter: SLC34A2/NAPI-2B, glutamate receptor: GRIK2/GLUR6. Up-regulates carriers: SLC9A3/NHE3, SLC12A1/NKCC2, SLC12A3/NCC, SLC5A3/SMIT, SLC2A1/GLUT1, SLC5A1/SGLT1 and SLC15A2/PEPT2. Regulates enzymes: GSK3A/B, PMM2 and Na(+)/K(+) ATPase, and transcription factors: CTNNB1 and nuclear factor NF-kappa-B. Stimulates sodium transport into epithelial cells by enhancing the stability and expression of SCNN1A/ENAC. This is achieved by phosphorylating the NEDD4L ubiquitin E3 ligase, promoting its interaction with 14-3-3 proteins, thereby preventing it from binding to SCNN1A/ENAC and targeting it for degradation. Regulates store-operated Ca(+2) entry (SOCE) by stimulating ORAI1 and STIM1. Regulates KCNJ1/ROMK1 directly via its phosphorylation or indirectly via increased interaction with SLC9A3R2/NHERF2. Phosphorylates MDM2 and activates MDM2-dependent ubiquitination of p53/TP53. Phosphorylates MAPT/TAU and mediates microtubule depolymerization and neurite formation in hippocampal neurons. Phosphorylates SLC2A4/GLUT4 and up-regulates its activity. Phosphorylates APBB1/FE65 and promotes its localization to the nucleus. Phosphorylates MAPK1/ERK2 and activates it by enhancing its interaction with MAP2K1/MEK1 and MAP2K2/MEK2. Phosphorylates FBXW7 and plays an inhibitory role in the NOTCH1 signaling. Phosphorylates FOXO1 resulting in its relocalization from the nucleus to the cytoplasm. Phosphorylates FOXO3, promoting its exit from the nucleus and interference with FOXO3-dependent transcription. Phosphorylates BRAF and MAP3K3/MEKK3 and inhibits their activity. Phosphorylates SLC9A3/NHE3 in response to dexamethasone, resulting in its activation and increased localization at the cell membrane. Phosphorylates CREB1. Necessary for vascular remodeling during angiogenesis. Sustained high levels and activity may contribute to conditions such as hypertension and diabetic nephropathy. Isoform 2 exhibited a greater effect on cell plasma membrane expression of SCNN1A/ENAC and Na(+) transport than isoform 1.</text>
</comment>
<comment type="catalytic activity">
    <reaction>
        <text>L-seryl-[protein] + ATP = O-phospho-L-seryl-[protein] + ADP + H(+)</text>
        <dbReference type="Rhea" id="RHEA:17989"/>
        <dbReference type="Rhea" id="RHEA-COMP:9863"/>
        <dbReference type="Rhea" id="RHEA-COMP:11604"/>
        <dbReference type="ChEBI" id="CHEBI:15378"/>
        <dbReference type="ChEBI" id="CHEBI:29999"/>
        <dbReference type="ChEBI" id="CHEBI:30616"/>
        <dbReference type="ChEBI" id="CHEBI:83421"/>
        <dbReference type="ChEBI" id="CHEBI:456216"/>
        <dbReference type="EC" id="2.7.11.1"/>
    </reaction>
</comment>
<comment type="catalytic activity">
    <reaction>
        <text>L-threonyl-[protein] + ATP = O-phospho-L-threonyl-[protein] + ADP + H(+)</text>
        <dbReference type="Rhea" id="RHEA:46608"/>
        <dbReference type="Rhea" id="RHEA-COMP:11060"/>
        <dbReference type="Rhea" id="RHEA-COMP:11605"/>
        <dbReference type="ChEBI" id="CHEBI:15378"/>
        <dbReference type="ChEBI" id="CHEBI:30013"/>
        <dbReference type="ChEBI" id="CHEBI:30616"/>
        <dbReference type="ChEBI" id="CHEBI:61977"/>
        <dbReference type="ChEBI" id="CHEBI:456216"/>
        <dbReference type="EC" id="2.7.11.1"/>
    </reaction>
</comment>
<comment type="activity regulation">
    <text evidence="4 40 47">Two specific sites, one in the kinase domain (Thr-256) and the other in the C-terminal regulatory region (Ser-422), need to be phosphorylated for its full activation (PubMed:10191262). Phosphorylation at Ser-397 and Ser-401 are also essential for its activity (PubMed:19068477). Activated by WNK1, WNK2, WNK3 and WNK4; which promote phosphorylation by mTORC2 (PubMed:36373794).</text>
</comment>
<comment type="subunit">
    <text evidence="8 10 18 26 32 35 41 43">Homodimer; disulfide-linked. Forms a trimeric complex with FBXW7 and NOTCH1. Interacts with MAPK3/ERK1, MAPK1/ERK2, MAP2K1/MEK1, MAP2K2/MEK2, NEDD4, NEDD4L, MAPT/TAU, MAPK7, CREB1, SLC9A3R2/NHERF2 and KCNJ1/ROMK1. Associates with the mammalian target of rapamycin complex 2 (mTORC2) via an interaction with MAPKAP1/SIN1.</text>
</comment>
<comment type="interaction">
    <interactant intactId="EBI-1042854">
        <id>O00141</id>
    </interactant>
    <interactant intactId="EBI-712959">
        <id>O15182</id>
        <label>CETN3</label>
    </interactant>
    <organismsDiffer>false</organismsDiffer>
    <experiments>3</experiments>
</comment>
<comment type="interaction">
    <interactant intactId="EBI-1042854">
        <id>O00141</id>
    </interactant>
    <interactant intactId="EBI-306914">
        <id>Q13451</id>
        <label>FKBP5</label>
    </interactant>
    <organismsDiffer>false</organismsDiffer>
    <experiments>2</experiments>
</comment>
<comment type="interaction">
    <interactant intactId="EBI-1042854">
        <id>O00141</id>
    </interactant>
    <interactant intactId="EBI-944295">
        <id>Q969L2</id>
        <label>MAL2</label>
    </interactant>
    <organismsDiffer>false</organismsDiffer>
    <experiments>3</experiments>
</comment>
<comment type="interaction">
    <interactant intactId="EBI-1042854">
        <id>O00141</id>
    </interactant>
    <interactant intactId="EBI-11978907">
        <id>Q9ULP0-2</id>
        <label>NDRG4</label>
    </interactant>
    <organismsDiffer>false</organismsDiffer>
    <experiments>3</experiments>
</comment>
<comment type="interaction">
    <interactant intactId="EBI-1042854">
        <id>O00141</id>
    </interactant>
    <interactant intactId="EBI-396587">
        <id>P49815</id>
        <label>TSC2</label>
    </interactant>
    <organismsDiffer>false</organismsDiffer>
    <experiments>4</experiments>
</comment>
<comment type="interaction">
    <interactant intactId="EBI-1042854">
        <id>O00141</id>
    </interactant>
    <interactant intactId="EBI-295378">
        <id>Q80UE6</id>
        <label>Wnk4</label>
    </interactant>
    <organismsDiffer>true</organismsDiffer>
    <experiments>2</experiments>
</comment>
<comment type="subcellular location">
    <subcellularLocation>
        <location>Cytoplasm</location>
    </subcellularLocation>
    <subcellularLocation>
        <location>Nucleus</location>
    </subcellularLocation>
    <subcellularLocation>
        <location>Endoplasmic reticulum membrane</location>
    </subcellularLocation>
    <subcellularLocation>
        <location>Cell membrane</location>
    </subcellularLocation>
    <subcellularLocation>
        <location>Mitochondrion</location>
    </subcellularLocation>
    <text>The subcellular localization is controlled by the cell cycle, as well as by exposure to specific hormones and environmental stress stimuli. In proliferating cells, it shuttles between the nucleus and cytoplasm in synchrony with the cell cycle, and in serum/growth factor-stimulated cells it resides in the nucleus. In contrast, after exposure to environmental stress or treatment with glucocorticoids, it is detected in the cytoplasm and with certain stress conditions is associated with the mitochondria. In osmoregulation through the epithelial sodium channel, it can be localized to the cytoplasmic surface of the cell membrane. Nuclear, upon phosphorylation.</text>
</comment>
<comment type="subcellular location">
    <molecule>Isoform 2</molecule>
    <subcellularLocation>
        <location>Cell membrane</location>
    </subcellularLocation>
</comment>
<comment type="alternative products">
    <event type="alternative promoter"/>
    <event type="alternative splicing"/>
    <isoform>
        <id>O00141-1</id>
        <name>1</name>
        <sequence type="displayed"/>
    </isoform>
    <isoform>
        <id>O00141-2</id>
        <name>2</name>
        <name>Sgk1.1</name>
        <name>Sgk1_v2</name>
        <sequence type="described" ref="VSP_037784"/>
    </isoform>
    <isoform>
        <id>O00141-3</id>
        <name>3</name>
        <name>Sgk1.2</name>
        <sequence type="described" ref="VSP_037785"/>
    </isoform>
    <isoform>
        <id>O00141-4</id>
        <name>4</name>
        <sequence type="described" ref="VSP_037786"/>
    </isoform>
    <isoform>
        <id>O00141-5</id>
        <name>5</name>
        <sequence type="described" ref="VSP_037787"/>
    </isoform>
</comment>
<comment type="tissue specificity">
    <text evidence="5 38">Expressed in most tissues with highest levels in the pancreas, followed by placenta, kidney and lung. Isoform 2 is strongly expressed in brain and pancreas, weaker in heart, placenta, lung, liver and skeletal muscle.</text>
</comment>
<comment type="induction">
    <text evidence="38">Induced by a very large spectrum of stimuli distinct from glucocorticoids and serum. These include aldosterone, cell shrinkage, cell swelling, TGF-beta, ischemic injury of the brain, neuronal excitotoxicity memory consolidation, chronic viral hepatitis, DNA-damaging agents, vitamin D3 psychophysiological stress, iron, glucose, EDN1, CSF2, fibroblast growth factor, platelet-derived growth factor, phorbolesters, follicle-stimulating hormone, sorbitol, heat shock, oxidative stress, UV irradiation, and p53/TP53. Many of these stimuli are highly cell-specific, as is the case, for example for aldosterone, which has been found to stimulate its expression only in cells derived from aldosterone-responsive epithelia. Isoform 2 is not induced by glucocorticoids but by excessive extracellular glucose and by TGFB1, in cultured cells.</text>
</comment>
<comment type="domain">
    <text>Isoform 2 subcellular localization at the cell membrane and resistance to proteasomal degradation is mediated by the sequences within the first 120 amino acids.</text>
</comment>
<comment type="PTM">
    <text evidence="4 6 8 39 40 43 47">Regulated by phosphorylation (PubMed:10191262, PubMed:11096081, PubMed:18925875, PubMed:20338997, PubMed:36373794). Activated by phosphorylation on Ser-422 by mTORC2, transforming it into a substrate for PDPK1 which phosphorylates it on Thr-256 (PubMed:10191262, PubMed:18925875, PubMed:20338997, PubMed:36373794). Phosphorylation on Ser-397 and Ser-401 are also essential for its activity (PubMed:19068477). Phosphorylation on Ser-78 by MAPK7 is required for growth factor-induced cell cycle progression (PubMed:11254654).</text>
</comment>
<comment type="PTM">
    <text evidence="25">Ubiquitinated by NEDD4L; which promotes proteasomal degradation. Ubiquitinated by SYVN1 at the endoplasmic reticulum; which promotes rapid proteasomal degradation and maintains a high turnover rate in resting cells. Isoform 2 shows enhanced stability.</text>
</comment>
<comment type="miscellaneous">
    <molecule>Isoform 2</molecule>
    <text evidence="51">Produced by alternative promoter usage.</text>
</comment>
<comment type="miscellaneous">
    <molecule>Isoform 3</molecule>
    <text evidence="51">Produced by alternative promoter usage.</text>
</comment>
<comment type="miscellaneous">
    <molecule>Isoform 4</molecule>
    <text evidence="51">Produced by alternative splicing of isoform 1.</text>
</comment>
<comment type="miscellaneous">
    <molecule>Isoform 5</molecule>
    <text evidence="51">Produced by alternative promoter usage.</text>
</comment>
<comment type="similarity">
    <text evidence="51">Belongs to the protein kinase superfamily. AGC Ser/Thr protein kinase family.</text>
</comment>
<proteinExistence type="evidence at protein level"/>
<name>SGK1_HUMAN</name>
<accession>O00141</accession>
<accession>B7UUP7</accession>
<accession>B7UUP8</accession>
<accession>B7UUP9</accession>
<accession>B7Z5B2</accession>
<accession>E1P583</accession>
<accession>Q5TCN2</accession>
<accession>Q5TCN3</accession>
<accession>Q5TCN4</accession>
<accession>Q5VY65</accession>
<accession>Q9UN56</accession>
<evidence type="ECO:0000255" key="1">
    <source>
        <dbReference type="PROSITE-ProRule" id="PRU00159"/>
    </source>
</evidence>
<evidence type="ECO:0000255" key="2">
    <source>
        <dbReference type="PROSITE-ProRule" id="PRU00618"/>
    </source>
</evidence>
<evidence type="ECO:0000256" key="3">
    <source>
        <dbReference type="SAM" id="MobiDB-lite"/>
    </source>
</evidence>
<evidence type="ECO:0000269" key="4">
    <source>
    </source>
</evidence>
<evidence type="ECO:0000269" key="5">
    <source>
    </source>
</evidence>
<evidence type="ECO:0000269" key="6">
    <source>
    </source>
</evidence>
<evidence type="ECO:0000269" key="7">
    <source>
    </source>
</evidence>
<evidence type="ECO:0000269" key="8">
    <source>
    </source>
</evidence>
<evidence type="ECO:0000269" key="9">
    <source>
    </source>
</evidence>
<evidence type="ECO:0000269" key="10">
    <source>
    </source>
</evidence>
<evidence type="ECO:0000269" key="11">
    <source>
    </source>
</evidence>
<evidence type="ECO:0000269" key="12">
    <source>
    </source>
</evidence>
<evidence type="ECO:0000269" key="13">
    <source>
    </source>
</evidence>
<evidence type="ECO:0000269" key="14">
    <source>
    </source>
</evidence>
<evidence type="ECO:0000269" key="15">
    <source>
    </source>
</evidence>
<evidence type="ECO:0000269" key="16">
    <source>
    </source>
</evidence>
<evidence type="ECO:0000269" key="17">
    <source>
    </source>
</evidence>
<evidence type="ECO:0000269" key="18">
    <source>
    </source>
</evidence>
<evidence type="ECO:0000269" key="19">
    <source>
    </source>
</evidence>
<evidence type="ECO:0000269" key="20">
    <source>
    </source>
</evidence>
<evidence type="ECO:0000269" key="21">
    <source>
    </source>
</evidence>
<evidence type="ECO:0000269" key="22">
    <source>
    </source>
</evidence>
<evidence type="ECO:0000269" key="23">
    <source>
    </source>
</evidence>
<evidence type="ECO:0000269" key="24">
    <source>
    </source>
</evidence>
<evidence type="ECO:0000269" key="25">
    <source>
    </source>
</evidence>
<evidence type="ECO:0000269" key="26">
    <source>
    </source>
</evidence>
<evidence type="ECO:0000269" key="27">
    <source>
    </source>
</evidence>
<evidence type="ECO:0000269" key="28">
    <source>
    </source>
</evidence>
<evidence type="ECO:0000269" key="29">
    <source>
    </source>
</evidence>
<evidence type="ECO:0000269" key="30">
    <source>
    </source>
</evidence>
<evidence type="ECO:0000269" key="31">
    <source>
    </source>
</evidence>
<evidence type="ECO:0000269" key="32">
    <source>
    </source>
</evidence>
<evidence type="ECO:0000269" key="33">
    <source>
    </source>
</evidence>
<evidence type="ECO:0000269" key="34">
    <source>
    </source>
</evidence>
<evidence type="ECO:0000269" key="35">
    <source>
    </source>
</evidence>
<evidence type="ECO:0000269" key="36">
    <source>
    </source>
</evidence>
<evidence type="ECO:0000269" key="37">
    <source>
    </source>
</evidence>
<evidence type="ECO:0000269" key="38">
    <source>
    </source>
</evidence>
<evidence type="ECO:0000269" key="39">
    <source>
    </source>
</evidence>
<evidence type="ECO:0000269" key="40">
    <source>
    </source>
</evidence>
<evidence type="ECO:0000269" key="41">
    <source>
    </source>
</evidence>
<evidence type="ECO:0000269" key="42">
    <source>
    </source>
</evidence>
<evidence type="ECO:0000269" key="43">
    <source>
    </source>
</evidence>
<evidence type="ECO:0000269" key="44">
    <source>
    </source>
</evidence>
<evidence type="ECO:0000269" key="45">
    <source>
    </source>
</evidence>
<evidence type="ECO:0000269" key="46">
    <source>
    </source>
</evidence>
<evidence type="ECO:0000269" key="47">
    <source>
    </source>
</evidence>
<evidence type="ECO:0000303" key="48">
    <source>
    </source>
</evidence>
<evidence type="ECO:0000303" key="49">
    <source>
    </source>
</evidence>
<evidence type="ECO:0000303" key="50">
    <source ref="4"/>
</evidence>
<evidence type="ECO:0000305" key="51"/>
<evidence type="ECO:0007744" key="52">
    <source>
    </source>
</evidence>
<evidence type="ECO:0007744" key="53">
    <source>
    </source>
</evidence>
<evidence type="ECO:0007744" key="54">
    <source>
    </source>
</evidence>
<evidence type="ECO:0007829" key="55">
    <source>
        <dbReference type="PDB" id="2R5T"/>
    </source>
</evidence>
<evidence type="ECO:0007829" key="56">
    <source>
        <dbReference type="PDB" id="3HDN"/>
    </source>
</evidence>
<sequence length="431" mass="48942">MTVKTEAAKGTLTYSRMRGMVAILIAFMKQRRMGLNDFIQKIANNSYACKHPEVQSILKISQPQEPELMNANPSPPPSPSQQINLGPSSNPHAKPSDFHFLKVIGKGSFGKVLLARHKAEEVFYAVKVLQKKAILKKKEEKHIMSERNVLLKNVKHPFLVGLHFSFQTADKLYFVLDYINGGELFYHLQRERCFLEPRARFYAAEIASALGYLHSLNIVYRDLKPENILLDSQGHIVLTDFGLCKENIEHNSTTSTFCGTPEYLAPEVLHKQPYDRTVDWWCLGAVLYEMLYGLPPFYSRNTAEMYDNILNKPLQLKPNITNSARHLLEGLLQKDRTKRLGAKDDFMEIKSHVFFSLINWDDLINKKITPPFNPNVSGPNDLRHFDPEFTEEPVPNSIGKSPDSVLVTASVKEAAEAFLGFSYAPPTDSFL</sequence>
<organism>
    <name type="scientific">Homo sapiens</name>
    <name type="common">Human</name>
    <dbReference type="NCBI Taxonomy" id="9606"/>
    <lineage>
        <taxon>Eukaryota</taxon>
        <taxon>Metazoa</taxon>
        <taxon>Chordata</taxon>
        <taxon>Craniata</taxon>
        <taxon>Vertebrata</taxon>
        <taxon>Euteleostomi</taxon>
        <taxon>Mammalia</taxon>
        <taxon>Eutheria</taxon>
        <taxon>Euarchontoglires</taxon>
        <taxon>Primates</taxon>
        <taxon>Haplorrhini</taxon>
        <taxon>Catarrhini</taxon>
        <taxon>Hominidae</taxon>
        <taxon>Homo</taxon>
    </lineage>
</organism>